<comment type="function">
    <text evidence="6 16">Binds to ssRNA containing the consensus sequence 5'-AGGUAA-3' (PubMed:21256132). Might normally function as a transcriptional repressor (PubMed:10767297). EWS-fusion-proteins (EFPS) may play a role in the tumorigenic process. They may disturb gene expression by mimicking, or interfering with the normal function of CTD-POLII within the transcription initiation complex. They may also contribute to an aberrant activation of the fusion protein target genes.</text>
</comment>
<comment type="subunit">
    <text evidence="2 15 23">Binds POLR2C, SF1, calmodulin and RNA. Interacts with PTK2B/FAK2 and TDRD3. Binds calmodulin in the presence, but not in the absence, of calcium ion. Forms a complex with REC8, PRDM9, SYCP3 and SYCP1; complex formation is dependent of phosphorylated form of REC8 and requires PRDM9 bound to hotspot DNA; EWSR1 joins PRDM9 with the chromosomal axis through REC8 (By similarity).</text>
</comment>
<comment type="interaction">
    <interactant intactId="EBI-739737">
        <id>Q01844</id>
    </interactant>
    <interactant intactId="EBI-1166928">
        <id>Q8N5M1</id>
        <label>ATPAF2</label>
    </interactant>
    <organismsDiffer>false</organismsDiffer>
    <experiments>7</experiments>
</comment>
<comment type="interaction">
    <interactant intactId="EBI-739737">
        <id>Q01844</id>
    </interactant>
    <interactant intactId="EBI-946046">
        <id>P54252</id>
        <label>ATXN3</label>
    </interactant>
    <organismsDiffer>false</organismsDiffer>
    <experiments>4</experiments>
</comment>
<comment type="interaction">
    <interactant intactId="EBI-739737">
        <id>Q01844</id>
    </interactant>
    <interactant intactId="EBI-447295">
        <id>Q09472</id>
        <label>EP300</label>
    </interactant>
    <organismsDiffer>false</organismsDiffer>
    <experiments>2</experiments>
</comment>
<comment type="interaction">
    <interactant intactId="EBI-739737">
        <id>Q01844</id>
    </interactant>
    <interactant intactId="EBI-739737">
        <id>Q01844</id>
        <label>EWSR1</label>
    </interactant>
    <organismsDiffer>false</organismsDiffer>
    <experiments>3</experiments>
</comment>
<comment type="interaction">
    <interactant intactId="EBI-739737">
        <id>Q01844</id>
    </interactant>
    <interactant intactId="EBI-400434">
        <id>P35637</id>
        <label>FUS</label>
    </interactant>
    <organismsDiffer>false</organismsDiffer>
    <experiments>5</experiments>
</comment>
<comment type="interaction">
    <interactant intactId="EBI-739737">
        <id>Q01844</id>
    </interactant>
    <interactant intactId="EBI-399080">
        <id>Q92993</id>
        <label>KAT5</label>
    </interactant>
    <organismsDiffer>false</organismsDiffer>
    <experiments>2</experiments>
</comment>
<comment type="interaction">
    <interactant intactId="EBI-739737">
        <id>Q01844</id>
    </interactant>
    <interactant intactId="EBI-741424">
        <id>Q8NDC0</id>
        <label>MAPK1IP1L</label>
    </interactant>
    <organismsDiffer>false</organismsDiffer>
    <experiments>5</experiments>
</comment>
<comment type="interaction">
    <interactant intactId="EBI-739737">
        <id>Q01844</id>
    </interactant>
    <interactant intactId="EBI-724639">
        <id>Q9UBV8</id>
        <label>PEF1</label>
    </interactant>
    <organismsDiffer>false</organismsDiffer>
    <experiments>3</experiments>
</comment>
<comment type="interaction">
    <interactant intactId="EBI-739737">
        <id>Q01844</id>
    </interactant>
    <interactant intactId="EBI-740019">
        <id>O15162</id>
        <label>PLSCR1</label>
    </interactant>
    <organismsDiffer>false</organismsDiffer>
    <experiments>4</experiments>
</comment>
<comment type="interaction">
    <interactant intactId="EBI-739737">
        <id>Q01844</id>
    </interactant>
    <interactant intactId="EBI-78738">
        <id>Q99873</id>
        <label>PRMT1</label>
    </interactant>
    <organismsDiffer>false</organismsDiffer>
    <experiments>2</experiments>
</comment>
<comment type="interaction">
    <interactant intactId="EBI-739737">
        <id>Q01844</id>
    </interactant>
    <interactant intactId="EBI-740924">
        <id>Q9NZ81</id>
        <label>PRR13</label>
    </interactant>
    <organismsDiffer>false</organismsDiffer>
    <experiments>3</experiments>
</comment>
<comment type="interaction">
    <interactant intactId="EBI-739737">
        <id>Q01844</id>
    </interactant>
    <interactant intactId="EBI-438698">
        <id>Q9NS23-2</id>
        <label>RASSF1</label>
    </interactant>
    <organismsDiffer>false</organismsDiffer>
    <experiments>3</experiments>
</comment>
<comment type="interaction">
    <interactant intactId="EBI-739737">
        <id>Q01844</id>
    </interactant>
    <interactant intactId="EBI-749911">
        <id>O95486</id>
        <label>SEC24A</label>
    </interactant>
    <organismsDiffer>false</organismsDiffer>
    <experiments>3</experiments>
</comment>
<comment type="interaction">
    <interactant intactId="EBI-739737">
        <id>Q01844</id>
    </interactant>
    <interactant intactId="EBI-748817">
        <id>O94855</id>
        <label>SEC24D</label>
    </interactant>
    <organismsDiffer>false</organismsDiffer>
    <experiments>3</experiments>
</comment>
<comment type="interaction">
    <interactant intactId="EBI-739737">
        <id>Q01844</id>
    </interactant>
    <interactant intactId="EBI-347263">
        <id>Q13485</id>
        <label>SMAD4</label>
    </interactant>
    <organismsDiffer>false</organismsDiffer>
    <experiments>3</experiments>
</comment>
<comment type="interaction">
    <interactant intactId="EBI-739737">
        <id>Q01844</id>
    </interactant>
    <interactant intactId="EBI-2902395">
        <id>Q9BWW4</id>
        <label>SSBP3</label>
    </interactant>
    <organismsDiffer>false</organismsDiffer>
    <experiments>3</experiments>
</comment>
<comment type="interaction">
    <interactant intactId="EBI-739737">
        <id>Q01844</id>
    </interactant>
    <interactant intactId="EBI-357061">
        <id>Q92734</id>
        <label>TFG</label>
    </interactant>
    <organismsDiffer>false</organismsDiffer>
    <experiments>3</experiments>
</comment>
<comment type="interaction">
    <interactant intactId="EBI-739737">
        <id>Q01844</id>
    </interactant>
    <interactant intactId="EBI-359224">
        <id>Q13077</id>
        <label>TRAF1</label>
    </interactant>
    <organismsDiffer>false</organismsDiffer>
    <experiments>3</experiments>
</comment>
<comment type="interaction">
    <interactant intactId="EBI-739737">
        <id>Q01844</id>
    </interactant>
    <interactant intactId="EBI-355744">
        <id>Q12933</id>
        <label>TRAF2</label>
    </interactant>
    <organismsDiffer>false</organismsDiffer>
    <experiments>3</experiments>
</comment>
<comment type="interaction">
    <interactant intactId="EBI-739737">
        <id>Q01844</id>
    </interactant>
    <interactant intactId="EBI-741694">
        <id>P49910</id>
        <label>ZNF165</label>
    </interactant>
    <organismsDiffer>false</organismsDiffer>
    <experiments>2</experiments>
</comment>
<comment type="interaction">
    <interactant intactId="EBI-25973273">
        <id>Q01844-3</id>
    </interactant>
    <interactant intactId="EBI-946046">
        <id>P54252</id>
        <label>ATXN3</label>
    </interactant>
    <organismsDiffer>false</organismsDiffer>
    <experiments>9</experiments>
</comment>
<comment type="interaction">
    <interactant intactId="EBI-25896785">
        <id>Q01844-4</id>
    </interactant>
    <interactant intactId="EBI-946046">
        <id>P54252</id>
        <label>ATXN3</label>
    </interactant>
    <organismsDiffer>false</organismsDiffer>
    <experiments>3</experiments>
</comment>
<comment type="interaction">
    <interactant intactId="EBI-25896785">
        <id>Q01844-4</id>
    </interactant>
    <interactant intactId="EBI-466029">
        <id>P42858</id>
        <label>HTT</label>
    </interactant>
    <organismsDiffer>false</organismsDiffer>
    <experiments>3</experiments>
</comment>
<comment type="interaction">
    <interactant intactId="EBI-25896785">
        <id>Q01844-4</id>
    </interactant>
    <interactant intactId="EBI-720609">
        <id>O76024</id>
        <label>WFS1</label>
    </interactant>
    <organismsDiffer>false</organismsDiffer>
    <experiments>3</experiments>
</comment>
<comment type="subcellular location">
    <subcellularLocation>
        <location evidence="12">Nucleus</location>
    </subcellularLocation>
    <subcellularLocation>
        <location evidence="12">Cytoplasm</location>
    </subcellularLocation>
    <subcellularLocation>
        <location evidence="12">Cell membrane</location>
    </subcellularLocation>
    <text>Relocates from cytoplasm to ribosomes upon PTK2B/FAK2 activation.</text>
</comment>
<comment type="alternative products">
    <event type="alternative splicing"/>
    <isoform>
        <id>Q01844-1</id>
        <name>EWS</name>
        <sequence type="displayed"/>
    </isoform>
    <isoform>
        <id>Q01844-2</id>
        <name>EWS-B</name>
        <sequence type="described" ref="VSP_005793"/>
    </isoform>
    <isoform>
        <id>Q01844-3</id>
        <name>3</name>
        <sequence type="described" ref="VSP_043453"/>
    </isoform>
    <isoform>
        <id>Q01844-4</id>
        <name>4</name>
        <sequence type="described" ref="VSP_043452 VSP_043454"/>
    </isoform>
    <isoform>
        <id>Q01844-5</id>
        <name>5</name>
        <sequence type="described" ref="VSP_043451 VSP_043453"/>
    </isoform>
    <isoform>
        <id>Q01844-6</id>
        <name>6</name>
        <sequence type="described" ref="VSP_045412"/>
    </isoform>
</comment>
<comment type="tissue specificity">
    <text>Ubiquitous.</text>
</comment>
<comment type="domain">
    <text>EWS activation domain (EAD) functions as a potent activation domain in EFPS. EWSR1 binds POLR2C but not POLR2E or POLR2G, whereas the isolated EAD binds POLR2E and POLR2G but not POLR2C. Cis-linked RNA-binding domain (RBD) can strongly and specifically repress trans-activation by the EAD.</text>
</comment>
<comment type="PTM">
    <text evidence="22">Phosphorylated; calmodulin-binding inhibits phosphorylation of Ser-266.</text>
</comment>
<comment type="PTM">
    <text evidence="8 14 24">Highly methylated on arginine residues. Methylation is mediated by PRMT1 and, at lower level by PRMT8.</text>
</comment>
<comment type="disease" evidence="9 10 18 21">
    <disease id="DI-02610">
        <name>Ewing sarcoma</name>
        <acronym>ES</acronym>
        <description>A highly malignant, metastatic, primitive small round cell tumor of bone and soft tissue that affects children and adolescents. It belongs to the Ewing sarcoma family of tumors, a group of morphologically heterogeneous neoplasms that share the same cytogenetic features. They are considered neural tumors derived from cells of the neural crest. Ewing sarcoma represents the less differentiated form of the tumors.</description>
        <dbReference type="MIM" id="612219"/>
    </disease>
    <text evidence="9 10 18 21">The protein represented in this entry is involved in disease pathogenesis. Chromosomal aberrations involving EWSR1 are found in patients with Ewing sarcoma. Translocation t(11;22)(q24;q12) with FLI1 (PubMed:15044653, PubMed:1522903). Translocation t(7;22)(p22;q12) with ETV1 (PubMed:7700648). Translocation t(21;22)(q22;q21) with ERG (PubMed:15044653). Translocation t(2;21;22)(q23;q22;q12) that forms a EWSR1-FEV fusion protein with potential oncogenic activity (PubMed:9121764).</text>
</comment>
<comment type="disease">
    <text evidence="17">A chromosomal aberration involving EWSR1 has been found in extraskeletal myxoid chondrosarcoma. Translocation t(9;22)(q22-31;q11-12) with NR4A3.</text>
</comment>
<comment type="disease">
    <text evidence="19">A chromosomal aberration involving EWSR1 is associated with desmoplastic small round cell tumor (DSRCT). Translocation t(11;22)(p13;q12) with WT1.</text>
</comment>
<comment type="disease">
    <text evidence="20">A chromosomal aberration involving EWSR1 is associated with malignant melanoma of soft parts (MMSP). Translocation t(12;22)(q13;q12) with ATF1. Malignant melanoma of soft parts, also known as soft tissue clear cell sarcoma, is a rare tumor developing in tendons and aponeuroses.</text>
</comment>
<comment type="disease">
    <text evidence="7">A chromosomal aberration involving EWSR1 is associated with small round cell sarcoma. Translocation t(11;22)(p36.1;q12) with PATZ1.</text>
</comment>
<comment type="disease" evidence="11 13">
    <disease id="DI-02611">
        <name>Angiomatoid fibrous histiocytoma</name>
        <acronym>AFH</acronym>
        <description>A distinct variant of malignant fibrous histiocytoma that typically occurs in children and adolescents and is manifest by nodular subcutaneous growth. Characteristic microscopic features include lobulated sheets of histiocyte-like cells intimately associated with areas of hemorrhage and cystic pseudovascular spaces, as well as a striking cuffing of inflammatory cells, mimicking a lymph node metastasis.</description>
        <dbReference type="MIM" id="612160"/>
    </disease>
    <text evidence="11 13">The gene represented in this entry is involved in disease pathogenesis. Chromosomal aberrations involving EWSR1 are found in patients with angiomatoid fibrous histiocytoma. Translocation t(12;22)(q13;q12) with ATF1 generates a chimeric EWSR1/ATF1 protein (PubMed:15884099). Translocation t(2;22)(q33;q12) with CREB1 generates a EWSR1/CREB1 fusion gene that is most common genetic abnormality in this tumor type (PubMed:17724745).</text>
</comment>
<comment type="disease">
    <text evidence="28">EFPS arise due to chromosomal translocations in which EWSR1 is fused to a variety of cellular transcription factors. EFPS are very potent transcriptional activators dependent on the EAD and a C-terminal DNA-binding domain contributed by the fusion partner. The spectrum of malignancies associated with EFPS are thought to arise via EFP-induced transcriptional deregulation, with the tumor phenotype specified by the EWSR1 fusion partner and cell type. Transcriptional repression of the transforming growth factor beta type II receptor (TGF beta RII) is an important target of the EWS-FLI1, EWS-ERG, or EWS-ETV1 oncogene.</text>
</comment>
<comment type="similarity">
    <text evidence="28">Belongs to the RRM TET family.</text>
</comment>
<comment type="sequence caution" evidence="28">
    <conflict type="erroneous initiation">
        <sequence resource="EMBL-CDS" id="CAA70044"/>
    </conflict>
</comment>
<comment type="online information" name="Atlas of Genetics and Cytogenetics in Oncology and Haematology">
    <link uri="https://atlasgeneticsoncology.org/gene/85/EWSR1"/>
</comment>
<keyword id="KW-0002">3D-structure</keyword>
<keyword id="KW-0007">Acetylation</keyword>
<keyword id="KW-0025">Alternative splicing</keyword>
<keyword id="KW-0112">Calmodulin-binding</keyword>
<keyword id="KW-1003">Cell membrane</keyword>
<keyword id="KW-0160">Chromosomal rearrangement</keyword>
<keyword id="KW-0963">Cytoplasm</keyword>
<keyword id="KW-0903">Direct protein sequencing</keyword>
<keyword id="KW-0472">Membrane</keyword>
<keyword id="KW-0479">Metal-binding</keyword>
<keyword id="KW-0488">Methylation</keyword>
<keyword id="KW-0539">Nucleus</keyword>
<keyword id="KW-0597">Phosphoprotein</keyword>
<keyword id="KW-1267">Proteomics identification</keyword>
<keyword id="KW-0656">Proto-oncogene</keyword>
<keyword id="KW-1185">Reference proteome</keyword>
<keyword id="KW-0677">Repeat</keyword>
<keyword id="KW-0678">Repressor</keyword>
<keyword id="KW-0694">RNA-binding</keyword>
<keyword id="KW-0804">Transcription</keyword>
<keyword id="KW-0805">Transcription regulation</keyword>
<keyword id="KW-0862">Zinc</keyword>
<keyword id="KW-0863">Zinc-finger</keyword>
<sequence length="656" mass="68478">MASTDYSTYSQAAAQQGYSAYTAQPTQGYAQTTQAYGQQSYGTYGQPTDVSYTQAQTTATYGQTAYATSYGQPPTGYTTPTAPQAYSQPVQGYGTGAYDTTTATVTTTQASYAAQSAYGTQPAYPAYGQQPAATAPTRPQDGNKPTETSQPQSSTGGYNQPSLGYGQSNYSYPQVPGSYPMQPVTAPPSYPPTSYSSTQPTSYDQSSYSQQNTYGQPSSYGQQSSYGQQSSYGQQPPTSYPPQTGSYSQAPSQYSQQSSSYGQQSSFRQDHPSSMGVYGQESGGFSGPGENRSMSGPDNRGRGRGGFDRGGMSRGGRGGGRGGMGSAGERGGFNKPGGPMDEGPDLDLGPPVDPDEDSDNSAIYVQGLNDSVTLDDLADFFKQCGVVKMNKRTGQPMIHIYLDKETGKPKGDATVSYEDPPTAKAAVEWFDGKDFQGSKLKVSLARKKPPMNSMRGGLPPREGRGMPPPLRGGPGGPGGPGGPMGRMGGRGGDRGGFPPRGPRGSRGNPSGGGNVQHRAGDWQCPNPGCGNQNFAWRTECNQCKAPKPEGFLPPPFPPPGGDRGRGGPGGMRGGRGGLMDRGGPGGMFRGGRGGDRGGFRGGRGMDRGGFGGGRRGGPGGPPGPLMEQMGGRRGGRGGPGKMDKGEHRQERRDRPY</sequence>
<organism>
    <name type="scientific">Homo sapiens</name>
    <name type="common">Human</name>
    <dbReference type="NCBI Taxonomy" id="9606"/>
    <lineage>
        <taxon>Eukaryota</taxon>
        <taxon>Metazoa</taxon>
        <taxon>Chordata</taxon>
        <taxon>Craniata</taxon>
        <taxon>Vertebrata</taxon>
        <taxon>Euteleostomi</taxon>
        <taxon>Mammalia</taxon>
        <taxon>Eutheria</taxon>
        <taxon>Euarchontoglires</taxon>
        <taxon>Primates</taxon>
        <taxon>Haplorrhini</taxon>
        <taxon>Catarrhini</taxon>
        <taxon>Hominidae</taxon>
        <taxon>Homo</taxon>
    </lineage>
</organism>
<feature type="chain" id="PRO_0000081586" description="RNA-binding protein EWS">
    <location>
        <begin position="1"/>
        <end position="656"/>
    </location>
</feature>
<feature type="repeat" description="1">
    <location>
        <begin position="8"/>
        <end position="16"/>
    </location>
</feature>
<feature type="repeat" description="2">
    <location>
        <begin position="17"/>
        <end position="27"/>
    </location>
</feature>
<feature type="repeat" description="3">
    <location>
        <begin position="28"/>
        <end position="34"/>
    </location>
</feature>
<feature type="repeat" description="4">
    <location>
        <begin position="35"/>
        <end position="42"/>
    </location>
</feature>
<feature type="repeat" description="5">
    <location>
        <begin position="43"/>
        <end position="50"/>
    </location>
</feature>
<feature type="repeat" description="6">
    <location>
        <begin position="51"/>
        <end position="59"/>
    </location>
</feature>
<feature type="repeat" description="7">
    <location>
        <begin position="60"/>
        <end position="68"/>
    </location>
</feature>
<feature type="repeat" description="8">
    <location>
        <begin position="69"/>
        <end position="75"/>
    </location>
</feature>
<feature type="repeat" description="9">
    <location>
        <begin position="76"/>
        <end position="84"/>
    </location>
</feature>
<feature type="repeat" description="10">
    <location>
        <begin position="85"/>
        <end position="91"/>
    </location>
</feature>
<feature type="repeat" description="11">
    <location>
        <begin position="92"/>
        <end position="110"/>
    </location>
</feature>
<feature type="repeat" description="12">
    <location>
        <begin position="111"/>
        <end position="116"/>
    </location>
</feature>
<feature type="repeat" description="13">
    <location>
        <begin position="117"/>
        <end position="125"/>
    </location>
</feature>
<feature type="repeat" description="14">
    <location>
        <begin position="126"/>
        <end position="156"/>
    </location>
</feature>
<feature type="repeat" description="15">
    <location>
        <begin position="157"/>
        <end position="163"/>
    </location>
</feature>
<feature type="repeat" description="16">
    <location>
        <begin position="164"/>
        <end position="170"/>
    </location>
</feature>
<feature type="repeat" description="17">
    <location>
        <begin position="171"/>
        <end position="177"/>
    </location>
</feature>
<feature type="repeat" description="18">
    <location>
        <begin position="178"/>
        <end position="188"/>
    </location>
</feature>
<feature type="repeat" description="19">
    <location>
        <begin position="189"/>
        <end position="193"/>
    </location>
</feature>
<feature type="repeat" description="20">
    <location>
        <begin position="194"/>
        <end position="201"/>
    </location>
</feature>
<feature type="repeat" description="21">
    <location>
        <begin position="202"/>
        <end position="206"/>
    </location>
</feature>
<feature type="repeat" description="22">
    <location>
        <begin position="207"/>
        <end position="212"/>
    </location>
</feature>
<feature type="repeat" description="23">
    <location>
        <begin position="213"/>
        <end position="218"/>
    </location>
</feature>
<feature type="repeat" description="24">
    <location>
        <begin position="219"/>
        <end position="224"/>
    </location>
</feature>
<feature type="repeat" description="25">
    <location>
        <begin position="225"/>
        <end position="230"/>
    </location>
</feature>
<feature type="repeat" description="26">
    <location>
        <begin position="231"/>
        <end position="238"/>
    </location>
</feature>
<feature type="repeat" description="27">
    <location>
        <begin position="239"/>
        <end position="245"/>
    </location>
</feature>
<feature type="repeat" description="28">
    <location>
        <begin position="246"/>
        <end position="252"/>
    </location>
</feature>
<feature type="repeat" description="29">
    <location>
        <begin position="253"/>
        <end position="259"/>
    </location>
</feature>
<feature type="domain" description="IQ">
    <location>
        <begin position="256"/>
        <end position="285"/>
    </location>
</feature>
<feature type="repeat" description="30">
    <location>
        <begin position="260"/>
        <end position="276"/>
    </location>
</feature>
<feature type="repeat" description="31">
    <location>
        <begin position="277"/>
        <end position="285"/>
    </location>
</feature>
<feature type="domain" description="RRM" evidence="3">
    <location>
        <begin position="361"/>
        <end position="447"/>
    </location>
</feature>
<feature type="zinc finger region" description="RanBP2-type" evidence="4">
    <location>
        <begin position="518"/>
        <end position="549"/>
    </location>
</feature>
<feature type="region of interest" description="EAD (Gln/Pro/Thr-rich)">
    <location>
        <begin position="1"/>
        <end position="285"/>
    </location>
</feature>
<feature type="region of interest" description="31 X approximate tandem repeats">
    <location>
        <begin position="8"/>
        <end position="285"/>
    </location>
</feature>
<feature type="region of interest" description="Disordered" evidence="5">
    <location>
        <begin position="123"/>
        <end position="360"/>
    </location>
</feature>
<feature type="region of interest" description="Disordered" evidence="5">
    <location>
        <begin position="448"/>
        <end position="525"/>
    </location>
</feature>
<feature type="region of interest" description="Disordered" evidence="5">
    <location>
        <begin position="547"/>
        <end position="656"/>
    </location>
</feature>
<feature type="short sequence motif" description="Nuclear localization signal" evidence="12">
    <location>
        <begin position="639"/>
        <end position="656"/>
    </location>
</feature>
<feature type="compositionally biased region" description="Low complexity" evidence="5">
    <location>
        <begin position="123"/>
        <end position="137"/>
    </location>
</feature>
<feature type="compositionally biased region" description="Polar residues" evidence="5">
    <location>
        <begin position="143"/>
        <end position="172"/>
    </location>
</feature>
<feature type="compositionally biased region" description="Low complexity" evidence="5">
    <location>
        <begin position="192"/>
        <end position="266"/>
    </location>
</feature>
<feature type="compositionally biased region" description="Gly residues" evidence="5">
    <location>
        <begin position="308"/>
        <end position="335"/>
    </location>
</feature>
<feature type="compositionally biased region" description="Low complexity" evidence="5">
    <location>
        <begin position="336"/>
        <end position="350"/>
    </location>
</feature>
<feature type="compositionally biased region" description="Gly residues" evidence="5">
    <location>
        <begin position="472"/>
        <end position="490"/>
    </location>
</feature>
<feature type="compositionally biased region" description="Pro residues" evidence="5">
    <location>
        <begin position="551"/>
        <end position="560"/>
    </location>
</feature>
<feature type="compositionally biased region" description="Gly residues" evidence="5">
    <location>
        <begin position="566"/>
        <end position="591"/>
    </location>
</feature>
<feature type="compositionally biased region" description="Basic and acidic residues" evidence="5">
    <location>
        <begin position="592"/>
        <end position="606"/>
    </location>
</feature>
<feature type="compositionally biased region" description="Gly residues" evidence="5">
    <location>
        <begin position="607"/>
        <end position="618"/>
    </location>
</feature>
<feature type="compositionally biased region" description="Basic and acidic residues" evidence="5">
    <location>
        <begin position="641"/>
        <end position="656"/>
    </location>
</feature>
<feature type="site" description="Breakpoint for translocation to form chimeric EWSR1/ATF1 protein">
    <location>
        <position position="265"/>
    </location>
</feature>
<feature type="site" description="Breakpoint for insertion to form EWSR1-FEV fusion protein">
    <location>
        <begin position="348"/>
        <end position="349"/>
    </location>
</feature>
<feature type="modified residue" description="Phosphoserine; by PKC" evidence="1">
    <location>
        <position position="266"/>
    </location>
</feature>
<feature type="modified residue" description="Asymmetric dimethylarginine" evidence="8">
    <location>
        <position position="300"/>
    </location>
</feature>
<feature type="modified residue" description="Asymmetric dimethylarginine" evidence="8">
    <location>
        <position position="302"/>
    </location>
</feature>
<feature type="modified residue" description="Asymmetric dimethylarginine" evidence="8">
    <location>
        <position position="304"/>
    </location>
</feature>
<feature type="modified residue" description="Asymmetric dimethylarginine" evidence="8">
    <location>
        <position position="309"/>
    </location>
</feature>
<feature type="modified residue" description="Asymmetric dimethylarginine" evidence="8">
    <location>
        <position position="314"/>
    </location>
</feature>
<feature type="modified residue" description="Asymmetric dimethylarginine" evidence="8">
    <location>
        <position position="317"/>
    </location>
</feature>
<feature type="modified residue" description="Asymmetric dimethylarginine" evidence="8">
    <location>
        <position position="321"/>
    </location>
</feature>
<feature type="modified residue" description="N6-acetyllysine" evidence="2">
    <location>
        <position position="439"/>
    </location>
</feature>
<feature type="modified residue" description="Asymmetric dimethylarginine" evidence="8">
    <location>
        <position position="455"/>
    </location>
</feature>
<feature type="modified residue" description="Asymmetric dimethylarginine" evidence="8">
    <location>
        <position position="464"/>
    </location>
</feature>
<feature type="modified residue" description="Asymmetric dimethylarginine; alternate" evidence="8">
    <location>
        <position position="471"/>
    </location>
</feature>
<feature type="modified residue" description="Omega-N-methylarginine; alternate" evidence="8 29">
    <location>
        <position position="471"/>
    </location>
</feature>
<feature type="modified residue" description="Omega-N-methylarginine" evidence="29">
    <location>
        <position position="486"/>
    </location>
</feature>
<feature type="modified residue" description="Asymmetric dimethylarginine; by PRMT8" evidence="8 14">
    <location>
        <position position="490"/>
    </location>
</feature>
<feature type="modified residue" description="Asymmetric dimethylarginine" evidence="8 24">
    <location>
        <position position="494"/>
    </location>
</feature>
<feature type="modified residue" description="Asymmetric dimethylarginine" evidence="8">
    <location>
        <position position="500"/>
    </location>
</feature>
<feature type="modified residue" description="Asymmetric dimethylarginine" evidence="8">
    <location>
        <position position="503"/>
    </location>
</feature>
<feature type="modified residue" description="Asymmetric dimethylarginine; alternate" evidence="8">
    <location>
        <position position="506"/>
    </location>
</feature>
<feature type="modified residue" description="Omega-N-methylarginine; alternate" evidence="2">
    <location>
        <position position="506"/>
    </location>
</feature>
<feature type="modified residue" description="Asymmetric dimethylarginine" evidence="8">
    <location>
        <position position="563"/>
    </location>
</feature>
<feature type="modified residue" description="Asymmetric dimethylarginine" evidence="8">
    <location>
        <position position="565"/>
    </location>
</feature>
<feature type="modified residue" description="Asymmetric dimethylarginine; alternate; by PRMT8" evidence="8 14">
    <location>
        <position position="572"/>
    </location>
</feature>
<feature type="modified residue" description="Omega-N-methylarginine; alternate; by PRMT8" evidence="8 14">
    <location>
        <position position="572"/>
    </location>
</feature>
<feature type="modified residue" description="Asymmetric dimethylarginine" evidence="8">
    <location>
        <position position="575"/>
    </location>
</feature>
<feature type="modified residue" description="Asymmetric dimethylarginine" evidence="8">
    <location>
        <position position="581"/>
    </location>
</feature>
<feature type="modified residue" description="Asymmetric dimethylarginine" evidence="8">
    <location>
        <position position="589"/>
    </location>
</feature>
<feature type="modified residue" description="Asymmetric dimethylarginine" evidence="8">
    <location>
        <position position="592"/>
    </location>
</feature>
<feature type="modified residue" description="Asymmetric dimethylarginine; alternate; by PRMT8" evidence="8 14">
    <location>
        <position position="596"/>
    </location>
</feature>
<feature type="modified residue" description="Omega-N-methylarginine; alternate; by PRMT8" evidence="8 14">
    <location>
        <position position="596"/>
    </location>
</feature>
<feature type="modified residue" description="Asymmetric dimethylarginine" evidence="8">
    <location>
        <position position="600"/>
    </location>
</feature>
<feature type="modified residue" description="Asymmetric dimethylarginine; by PRMT8" evidence="8 14">
    <location>
        <position position="603"/>
    </location>
</feature>
<feature type="modified residue" description="Asymmetric dimethylarginine; alternate; by PRMT8" evidence="8 14">
    <location>
        <position position="607"/>
    </location>
</feature>
<feature type="modified residue" description="Omega-N-methylarginine; alternate; by PRMT8" evidence="8 14">
    <location>
        <position position="607"/>
    </location>
</feature>
<feature type="modified residue" description="Asymmetric dimethylarginine; alternate" evidence="8 24">
    <location>
        <position position="615"/>
    </location>
</feature>
<feature type="modified residue" description="Omega-N-methylarginine; alternate" evidence="29">
    <location>
        <position position="615"/>
    </location>
</feature>
<feature type="modified residue" description="Asymmetric dimethylarginine" evidence="8">
    <location>
        <position position="633"/>
    </location>
</feature>
<feature type="modified residue" description="Asymmetric dimethylarginine" evidence="8">
    <location>
        <position position="636"/>
    </location>
</feature>
<feature type="splice variant" id="VSP_043451" description="In isoform 5." evidence="25">
    <original>P</original>
    <variation>PTVEGTS</variation>
    <location>
        <position position="74"/>
    </location>
</feature>
<feature type="splice variant" id="VSP_045412" description="In isoform 6." evidence="25">
    <location>
        <begin position="136"/>
        <end position="191"/>
    </location>
</feature>
<feature type="splice variant" id="VSP_005793" description="In isoform EWS-B." evidence="28">
    <location>
        <begin position="266"/>
        <end position="338"/>
    </location>
</feature>
<feature type="splice variant" id="VSP_043452" description="In isoform 4." evidence="27">
    <original>SAGERGGFNKPGGPMDEGPDLDLGPPVDP</original>
    <variation>LQSESLVYTSILKKYPYSVLSRQHNEKWD</variation>
    <location>
        <begin position="326"/>
        <end position="354"/>
    </location>
</feature>
<feature type="splice variant" id="VSP_043453" description="In isoform 3 and isoform 5." evidence="25 26 27">
    <location>
        <position position="326"/>
    </location>
</feature>
<feature type="splice variant" id="VSP_043454" description="In isoform 4." evidence="27">
    <location>
        <begin position="355"/>
        <end position="656"/>
    </location>
</feature>
<feature type="mutagenesis site" description="Cytoplasmic localization." evidence="12">
    <original>R</original>
    <variation>A</variation>
    <location>
        <position position="648"/>
    </location>
</feature>
<feature type="mutagenesis site" description="No effect on nuclear targeting." evidence="12">
    <original>R</original>
    <variation>K</variation>
    <location>
        <position position="648"/>
    </location>
</feature>
<feature type="mutagenesis site" description="No effect on nuclear targeting." evidence="12">
    <original>R</original>
    <variation>A</variation>
    <location>
        <position position="651"/>
    </location>
</feature>
<feature type="mutagenesis site" description="Cytoplasmic localization." evidence="12">
    <original>R</original>
    <variation>A</variation>
    <location>
        <position position="652"/>
    </location>
</feature>
<feature type="mutagenesis site" description="No effect on nuclear targeting." evidence="12">
    <original>R</original>
    <variation>K</variation>
    <location>
        <position position="652"/>
    </location>
</feature>
<feature type="mutagenesis site" description="No effect on nuclear targeting." evidence="12">
    <original>D</original>
    <variation>A</variation>
    <location>
        <position position="653"/>
    </location>
</feature>
<feature type="mutagenesis site" description="No effect on nuclear targeting." evidence="12">
    <original>R</original>
    <variation>A</variation>
    <location>
        <position position="654"/>
    </location>
</feature>
<feature type="mutagenesis site" description="Cytoplasmic localization." evidence="12">
    <original>P</original>
    <variation>A</variation>
    <location>
        <position position="655"/>
    </location>
</feature>
<feature type="mutagenesis site" description="Cytoplasmic localization." evidence="12">
    <original>Y</original>
    <variation>A</variation>
    <location>
        <position position="656"/>
    </location>
</feature>
<feature type="sequence conflict" description="In Ref. 5; BAB71252." evidence="28" ref="5">
    <original>S</original>
    <variation>G</variation>
    <location>
        <position position="224"/>
    </location>
</feature>
<feature type="strand" evidence="30">
    <location>
        <begin position="362"/>
        <end position="366"/>
    </location>
</feature>
<feature type="helix" evidence="30">
    <location>
        <begin position="374"/>
        <end position="381"/>
    </location>
</feature>
<feature type="turn" evidence="30">
    <location>
        <begin position="382"/>
        <end position="384"/>
    </location>
</feature>
<feature type="strand" evidence="30">
    <location>
        <begin position="391"/>
        <end position="393"/>
    </location>
</feature>
<feature type="strand" evidence="30">
    <location>
        <begin position="396"/>
        <end position="399"/>
    </location>
</feature>
<feature type="turn" evidence="30">
    <location>
        <begin position="404"/>
        <end position="406"/>
    </location>
</feature>
<feature type="strand" evidence="30">
    <location>
        <begin position="411"/>
        <end position="419"/>
    </location>
</feature>
<feature type="helix" evidence="30">
    <location>
        <begin position="420"/>
        <end position="430"/>
    </location>
</feature>
<feature type="strand" evidence="30">
    <location>
        <begin position="441"/>
        <end position="443"/>
    </location>
</feature>
<protein>
    <recommendedName>
        <fullName>RNA-binding protein EWS</fullName>
    </recommendedName>
    <alternativeName>
        <fullName>EWS oncogene</fullName>
    </alternativeName>
    <alternativeName>
        <fullName>Ewing sarcoma breakpoint region 1 protein</fullName>
    </alternativeName>
</protein>
<dbReference type="EMBL" id="X66899">
    <property type="protein sequence ID" value="CAA47350.1"/>
    <property type="molecule type" value="mRNA"/>
</dbReference>
<dbReference type="EMBL" id="X72990">
    <property type="protein sequence ID" value="CAA51489.1"/>
    <property type="molecule type" value="Genomic_DNA"/>
</dbReference>
<dbReference type="EMBL" id="X72991">
    <property type="protein sequence ID" value="CAA51489.1"/>
    <property type="status" value="JOINED"/>
    <property type="molecule type" value="Genomic_DNA"/>
</dbReference>
<dbReference type="EMBL" id="X72992">
    <property type="protein sequence ID" value="CAA51489.1"/>
    <property type="status" value="JOINED"/>
    <property type="molecule type" value="Genomic_DNA"/>
</dbReference>
<dbReference type="EMBL" id="X72993">
    <property type="protein sequence ID" value="CAA51489.1"/>
    <property type="status" value="JOINED"/>
    <property type="molecule type" value="Genomic_DNA"/>
</dbReference>
<dbReference type="EMBL" id="X72994">
    <property type="protein sequence ID" value="CAA51489.1"/>
    <property type="status" value="JOINED"/>
    <property type="molecule type" value="Genomic_DNA"/>
</dbReference>
<dbReference type="EMBL" id="X72995">
    <property type="protein sequence ID" value="CAA51489.1"/>
    <property type="status" value="JOINED"/>
    <property type="molecule type" value="Genomic_DNA"/>
</dbReference>
<dbReference type="EMBL" id="X72996">
    <property type="protein sequence ID" value="CAA51489.1"/>
    <property type="status" value="JOINED"/>
    <property type="molecule type" value="Genomic_DNA"/>
</dbReference>
<dbReference type="EMBL" id="X72997">
    <property type="protein sequence ID" value="CAA51489.1"/>
    <property type="status" value="JOINED"/>
    <property type="molecule type" value="Genomic_DNA"/>
</dbReference>
<dbReference type="EMBL" id="X72998">
    <property type="protein sequence ID" value="CAA51489.1"/>
    <property type="status" value="JOINED"/>
    <property type="molecule type" value="Genomic_DNA"/>
</dbReference>
<dbReference type="EMBL" id="X72999">
    <property type="protein sequence ID" value="CAA51489.1"/>
    <property type="status" value="JOINED"/>
    <property type="molecule type" value="Genomic_DNA"/>
</dbReference>
<dbReference type="EMBL" id="X73000">
    <property type="protein sequence ID" value="CAA51489.1"/>
    <property type="status" value="JOINED"/>
    <property type="molecule type" value="Genomic_DNA"/>
</dbReference>
<dbReference type="EMBL" id="X73001">
    <property type="protein sequence ID" value="CAA51489.1"/>
    <property type="status" value="JOINED"/>
    <property type="molecule type" value="Genomic_DNA"/>
</dbReference>
<dbReference type="EMBL" id="X73002">
    <property type="protein sequence ID" value="CAA51489.1"/>
    <property type="status" value="JOINED"/>
    <property type="molecule type" value="Genomic_DNA"/>
</dbReference>
<dbReference type="EMBL" id="X73003">
    <property type="protein sequence ID" value="CAA51489.1"/>
    <property type="status" value="JOINED"/>
    <property type="molecule type" value="Genomic_DNA"/>
</dbReference>
<dbReference type="EMBL" id="X73004">
    <property type="protein sequence ID" value="CAA51489.1"/>
    <property type="status" value="JOINED"/>
    <property type="molecule type" value="Genomic_DNA"/>
</dbReference>
<dbReference type="EMBL" id="Y07848">
    <property type="protein sequence ID" value="CAA69177.1"/>
    <property type="molecule type" value="Genomic_DNA"/>
</dbReference>
<dbReference type="EMBL" id="CR456490">
    <property type="protein sequence ID" value="CAG30376.1"/>
    <property type="molecule type" value="mRNA"/>
</dbReference>
<dbReference type="EMBL" id="AK056309">
    <property type="protein sequence ID" value="BAB71145.1"/>
    <property type="molecule type" value="mRNA"/>
</dbReference>
<dbReference type="EMBL" id="AK056681">
    <property type="protein sequence ID" value="BAB71252.1"/>
    <property type="molecule type" value="mRNA"/>
</dbReference>
<dbReference type="EMBL" id="AL031186">
    <property type="protein sequence ID" value="CAI18001.1"/>
    <property type="molecule type" value="Genomic_DNA"/>
</dbReference>
<dbReference type="EMBL" id="AC000026">
    <property type="protein sequence ID" value="CAI18001.1"/>
    <property type="status" value="JOINED"/>
    <property type="molecule type" value="Genomic_DNA"/>
</dbReference>
<dbReference type="EMBL" id="AC002059">
    <property type="protein sequence ID" value="CAI18001.1"/>
    <property type="status" value="JOINED"/>
    <property type="molecule type" value="Genomic_DNA"/>
</dbReference>
<dbReference type="EMBL" id="AL031186">
    <property type="protein sequence ID" value="CAQ10937.1"/>
    <property type="molecule type" value="Genomic_DNA"/>
</dbReference>
<dbReference type="EMBL" id="AC000026">
    <property type="protein sequence ID" value="CAQ10937.1"/>
    <property type="status" value="JOINED"/>
    <property type="molecule type" value="Genomic_DNA"/>
</dbReference>
<dbReference type="EMBL" id="AC002059">
    <property type="protein sequence ID" value="CAQ10937.1"/>
    <property type="status" value="JOINED"/>
    <property type="molecule type" value="Genomic_DNA"/>
</dbReference>
<dbReference type="EMBL" id="AL031186">
    <property type="protein sequence ID" value="CAQ10938.1"/>
    <property type="molecule type" value="Genomic_DNA"/>
</dbReference>
<dbReference type="EMBL" id="AC000026">
    <property type="protein sequence ID" value="CAQ10938.1"/>
    <property type="status" value="JOINED"/>
    <property type="molecule type" value="Genomic_DNA"/>
</dbReference>
<dbReference type="EMBL" id="AC002059">
    <property type="protein sequence ID" value="CAQ10938.1"/>
    <property type="status" value="JOINED"/>
    <property type="molecule type" value="Genomic_DNA"/>
</dbReference>
<dbReference type="EMBL" id="AL031186">
    <property type="protein sequence ID" value="CAQ10940.1"/>
    <property type="molecule type" value="Genomic_DNA"/>
</dbReference>
<dbReference type="EMBL" id="AC000026">
    <property type="protein sequence ID" value="CAQ10940.1"/>
    <property type="status" value="JOINED"/>
    <property type="molecule type" value="Genomic_DNA"/>
</dbReference>
<dbReference type="EMBL" id="AC002059">
    <property type="protein sequence ID" value="CAQ10940.1"/>
    <property type="status" value="JOINED"/>
    <property type="molecule type" value="Genomic_DNA"/>
</dbReference>
<dbReference type="EMBL" id="CH471095">
    <property type="protein sequence ID" value="EAW59780.1"/>
    <property type="molecule type" value="Genomic_DNA"/>
</dbReference>
<dbReference type="EMBL" id="CH471095">
    <property type="protein sequence ID" value="EAW59781.1"/>
    <property type="molecule type" value="Genomic_DNA"/>
</dbReference>
<dbReference type="EMBL" id="CH471095">
    <property type="protein sequence ID" value="EAW59785.1"/>
    <property type="molecule type" value="Genomic_DNA"/>
</dbReference>
<dbReference type="EMBL" id="CH471095">
    <property type="protein sequence ID" value="EAW59786.1"/>
    <property type="molecule type" value="Genomic_DNA"/>
</dbReference>
<dbReference type="EMBL" id="CH471095">
    <property type="protein sequence ID" value="EAW59787.1"/>
    <property type="molecule type" value="Genomic_DNA"/>
</dbReference>
<dbReference type="EMBL" id="BC000527">
    <property type="protein sequence ID" value="AAH00527.1"/>
    <property type="molecule type" value="mRNA"/>
</dbReference>
<dbReference type="EMBL" id="BC004817">
    <property type="protein sequence ID" value="AAH04817.1"/>
    <property type="molecule type" value="mRNA"/>
</dbReference>
<dbReference type="EMBL" id="BC011048">
    <property type="protein sequence ID" value="AAH11048.1"/>
    <property type="molecule type" value="mRNA"/>
</dbReference>
<dbReference type="EMBL" id="BC072442">
    <property type="protein sequence ID" value="AAH72442.1"/>
    <property type="molecule type" value="mRNA"/>
</dbReference>
<dbReference type="EMBL" id="Y08806">
    <property type="protein sequence ID" value="CAA70044.1"/>
    <property type="status" value="ALT_INIT"/>
    <property type="molecule type" value="Genomic_DNA"/>
</dbReference>
<dbReference type="EMBL" id="AB016435">
    <property type="protein sequence ID" value="BAA31990.1"/>
    <property type="molecule type" value="Genomic_DNA"/>
</dbReference>
<dbReference type="CCDS" id="CCDS13851.1">
    <molecule id="Q01844-1"/>
</dbReference>
<dbReference type="CCDS" id="CCDS13852.2">
    <molecule id="Q01844-5"/>
</dbReference>
<dbReference type="CCDS" id="CCDS54512.1">
    <molecule id="Q01844-4"/>
</dbReference>
<dbReference type="CCDS" id="CCDS54513.1">
    <molecule id="Q01844-3"/>
</dbReference>
<dbReference type="CCDS" id="CCDS54514.1">
    <molecule id="Q01844-6"/>
</dbReference>
<dbReference type="PIR" id="A49358">
    <property type="entry name" value="A49358"/>
</dbReference>
<dbReference type="RefSeq" id="NP_001156757.1">
    <molecule id="Q01844-3"/>
    <property type="nucleotide sequence ID" value="NM_001163285.2"/>
</dbReference>
<dbReference type="RefSeq" id="NP_001156758.1">
    <molecule id="Q01844-6"/>
    <property type="nucleotide sequence ID" value="NM_001163286.2"/>
</dbReference>
<dbReference type="RefSeq" id="NP_001156759.1">
    <molecule id="Q01844-4"/>
    <property type="nucleotide sequence ID" value="NM_001163287.2"/>
</dbReference>
<dbReference type="RefSeq" id="NP_005234.1">
    <molecule id="Q01844-1"/>
    <property type="nucleotide sequence ID" value="NM_005243.4"/>
</dbReference>
<dbReference type="RefSeq" id="NP_053733.2">
    <molecule id="Q01844-5"/>
    <property type="nucleotide sequence ID" value="NM_013986.4"/>
</dbReference>
<dbReference type="PDB" id="2CPE">
    <property type="method" value="NMR"/>
    <property type="chains" value="A=353-453"/>
</dbReference>
<dbReference type="PDBsum" id="2CPE"/>
<dbReference type="BMRB" id="Q01844"/>
<dbReference type="SMR" id="Q01844"/>
<dbReference type="BioGRID" id="108431">
    <property type="interactions" value="855"/>
</dbReference>
<dbReference type="CORUM" id="Q01844"/>
<dbReference type="DIP" id="DIP-34449N"/>
<dbReference type="FunCoup" id="Q01844">
    <property type="interactions" value="3874"/>
</dbReference>
<dbReference type="IntAct" id="Q01844">
    <property type="interactions" value="231"/>
</dbReference>
<dbReference type="MINT" id="Q01844"/>
<dbReference type="STRING" id="9606.ENSP00000400142"/>
<dbReference type="BindingDB" id="Q01844"/>
<dbReference type="ChEMBL" id="CHEMBL3351202"/>
<dbReference type="GlyCosmos" id="Q01844">
    <property type="glycosylation" value="46 sites, 2 glycans"/>
</dbReference>
<dbReference type="GlyGen" id="Q01844">
    <property type="glycosylation" value="50 sites, 1 N-linked glycan (1 site), 2 O-linked glycans (49 sites)"/>
</dbReference>
<dbReference type="iPTMnet" id="Q01844"/>
<dbReference type="MetOSite" id="Q01844"/>
<dbReference type="PhosphoSitePlus" id="Q01844"/>
<dbReference type="SwissPalm" id="Q01844"/>
<dbReference type="BioMuta" id="EWSR1"/>
<dbReference type="DMDM" id="544261"/>
<dbReference type="jPOST" id="Q01844"/>
<dbReference type="MassIVE" id="Q01844"/>
<dbReference type="PaxDb" id="9606-ENSP00000400142"/>
<dbReference type="PeptideAtlas" id="Q01844"/>
<dbReference type="ProteomicsDB" id="2658"/>
<dbReference type="ProteomicsDB" id="58004">
    <molecule id="Q01844-1"/>
</dbReference>
<dbReference type="ProteomicsDB" id="58005">
    <molecule id="Q01844-2"/>
</dbReference>
<dbReference type="ProteomicsDB" id="58006">
    <molecule id="Q01844-3"/>
</dbReference>
<dbReference type="ProteomicsDB" id="58007">
    <molecule id="Q01844-4"/>
</dbReference>
<dbReference type="ProteomicsDB" id="58008">
    <molecule id="Q01844-5"/>
</dbReference>
<dbReference type="Pumba" id="Q01844"/>
<dbReference type="Antibodypedia" id="3786">
    <property type="antibodies" value="582 antibodies from 40 providers"/>
</dbReference>
<dbReference type="DNASU" id="2130"/>
<dbReference type="Ensembl" id="ENST00000332035.10">
    <molecule id="Q01844-6"/>
    <property type="protein sequence ID" value="ENSP00000331699.6"/>
    <property type="gene ID" value="ENSG00000182944.18"/>
</dbReference>
<dbReference type="Ensembl" id="ENST00000333395.11">
    <molecule id="Q01844-4"/>
    <property type="protein sequence ID" value="ENSP00000327456.6"/>
    <property type="gene ID" value="ENSG00000182944.18"/>
</dbReference>
<dbReference type="Ensembl" id="ENST00000397938.7">
    <molecule id="Q01844-1"/>
    <property type="protein sequence ID" value="ENSP00000381031.2"/>
    <property type="gene ID" value="ENSG00000182944.18"/>
</dbReference>
<dbReference type="Ensembl" id="ENST00000406548.5">
    <molecule id="Q01844-3"/>
    <property type="protein sequence ID" value="ENSP00000385726.1"/>
    <property type="gene ID" value="ENSG00000182944.18"/>
</dbReference>
<dbReference type="Ensembl" id="ENST00000414183.6">
    <molecule id="Q01844-5"/>
    <property type="protein sequence ID" value="ENSP00000400142.2"/>
    <property type="gene ID" value="ENSG00000182944.18"/>
</dbReference>
<dbReference type="GeneID" id="2130"/>
<dbReference type="KEGG" id="hsa:2130"/>
<dbReference type="MANE-Select" id="ENST00000397938.7">
    <property type="protein sequence ID" value="ENSP00000381031.2"/>
    <property type="RefSeq nucleotide sequence ID" value="NM_005243.4"/>
    <property type="RefSeq protein sequence ID" value="NP_005234.1"/>
</dbReference>
<dbReference type="UCSC" id="uc003aes.5">
    <molecule id="Q01844-1"/>
    <property type="organism name" value="human"/>
</dbReference>
<dbReference type="AGR" id="HGNC:3508"/>
<dbReference type="CTD" id="2130"/>
<dbReference type="DisGeNET" id="2130"/>
<dbReference type="GeneCards" id="EWSR1"/>
<dbReference type="HGNC" id="HGNC:3508">
    <property type="gene designation" value="EWSR1"/>
</dbReference>
<dbReference type="HPA" id="ENSG00000182944">
    <property type="expression patterns" value="Low tissue specificity"/>
</dbReference>
<dbReference type="MalaCards" id="EWSR1"/>
<dbReference type="MIM" id="133450">
    <property type="type" value="gene"/>
</dbReference>
<dbReference type="MIM" id="612160">
    <property type="type" value="phenotype"/>
</dbReference>
<dbReference type="MIM" id="612219">
    <property type="type" value="phenotype"/>
</dbReference>
<dbReference type="neXtProt" id="NX_Q01844"/>
<dbReference type="OpenTargets" id="ENSG00000182944"/>
<dbReference type="Orphanet" id="83469">
    <property type="disease" value="Desmoplastic small round cell tumor"/>
</dbReference>
<dbReference type="Orphanet" id="370334">
    <property type="disease" value="Extraskeletal Ewing sarcoma"/>
</dbReference>
<dbReference type="Orphanet" id="209916">
    <property type="disease" value="Extraskeletal myxoid chondrosarcoma"/>
</dbReference>
<dbReference type="Orphanet" id="97338">
    <property type="disease" value="Melanoma of soft tissue"/>
</dbReference>
<dbReference type="Orphanet" id="319">
    <property type="disease" value="Skeletal Ewing sarcoma"/>
</dbReference>
<dbReference type="PharmGKB" id="PA27921"/>
<dbReference type="VEuPathDB" id="HostDB:ENSG00000182944"/>
<dbReference type="eggNOG" id="KOG1995">
    <property type="taxonomic scope" value="Eukaryota"/>
</dbReference>
<dbReference type="GeneTree" id="ENSGT00940000154191"/>
<dbReference type="HOGENOM" id="CLU_025609_1_1_1"/>
<dbReference type="InParanoid" id="Q01844"/>
<dbReference type="OMA" id="DFDRGGM"/>
<dbReference type="OrthoDB" id="76445at2759"/>
<dbReference type="PAN-GO" id="Q01844">
    <property type="GO annotations" value="3 GO annotations based on evolutionary models"/>
</dbReference>
<dbReference type="PhylomeDB" id="Q01844"/>
<dbReference type="TreeFam" id="TF322599"/>
<dbReference type="PathwayCommons" id="Q01844"/>
<dbReference type="SignaLink" id="Q01844"/>
<dbReference type="SIGNOR" id="Q01844"/>
<dbReference type="BioGRID-ORCS" id="2130">
    <property type="hits" value="702 hits in 1193 CRISPR screens"/>
</dbReference>
<dbReference type="CD-CODE" id="0B2C2654">
    <property type="entry name" value="Synthetic Condensate 000105"/>
</dbReference>
<dbReference type="CD-CODE" id="1A18FFC4">
    <property type="entry name" value="Paraspeckle"/>
</dbReference>
<dbReference type="CD-CODE" id="232F8A39">
    <property type="entry name" value="P-body"/>
</dbReference>
<dbReference type="CD-CODE" id="33D42E40">
    <property type="entry name" value="Synthetic Condensate 000271"/>
</dbReference>
<dbReference type="CD-CODE" id="3521A8E2">
    <property type="entry name" value="Synthetic Condensate 000312"/>
</dbReference>
<dbReference type="CD-CODE" id="38EC0B30">
    <property type="entry name" value="Transcriptional condensate"/>
</dbReference>
<dbReference type="CD-CODE" id="3C81F809">
    <property type="entry name" value="Synthetic Condensate 000288"/>
</dbReference>
<dbReference type="CD-CODE" id="462A97B5">
    <property type="entry name" value="Leucocyte nuclear body"/>
</dbReference>
<dbReference type="CD-CODE" id="58F5AC37">
    <property type="entry name" value="Synthetic Condensate 000283"/>
</dbReference>
<dbReference type="CD-CODE" id="804901D1">
    <property type="entry name" value="Nuclear speckle"/>
</dbReference>
<dbReference type="CD-CODE" id="89D22CC2">
    <property type="entry name" value="Synthetic Condensate 000270"/>
</dbReference>
<dbReference type="CD-CODE" id="8C2F96ED">
    <property type="entry name" value="Centrosome"/>
</dbReference>
<dbReference type="CD-CODE" id="91857CE7">
    <property type="entry name" value="Nucleolus"/>
</dbReference>
<dbReference type="CD-CODE" id="B8725CFA">
    <property type="entry name" value="Synthetic Condensate 000007"/>
</dbReference>
<dbReference type="CD-CODE" id="D0109C64">
    <property type="entry name" value="Synthetic Condensate 000306"/>
</dbReference>
<dbReference type="CD-CODE" id="D3EAE6DE">
    <property type="entry name" value="EWS-FLI1"/>
</dbReference>
<dbReference type="CD-CODE" id="D8E9712B">
    <property type="entry name" value="Neuronal RNP granule"/>
</dbReference>
<dbReference type="CD-CODE" id="DEE660B4">
    <property type="entry name" value="Stress granule"/>
</dbReference>
<dbReference type="ChiTaRS" id="EWSR1">
    <property type="organism name" value="human"/>
</dbReference>
<dbReference type="EvolutionaryTrace" id="Q01844"/>
<dbReference type="GeneWiki" id="Ewing_sarcoma_breakpoint_region_1"/>
<dbReference type="GenomeRNAi" id="2130"/>
<dbReference type="Pharos" id="Q01844">
    <property type="development level" value="Tbio"/>
</dbReference>
<dbReference type="PRO" id="PR:Q01844"/>
<dbReference type="Proteomes" id="UP000005640">
    <property type="component" value="Chromosome 22"/>
</dbReference>
<dbReference type="RNAct" id="Q01844">
    <property type="molecule type" value="protein"/>
</dbReference>
<dbReference type="Bgee" id="ENSG00000182944">
    <property type="expression patterns" value="Expressed in right uterine tube and 207 other cell types or tissues"/>
</dbReference>
<dbReference type="ExpressionAtlas" id="Q01844">
    <property type="expression patterns" value="baseline and differential"/>
</dbReference>
<dbReference type="GO" id="GO:0015030">
    <property type="term" value="C:Cajal body"/>
    <property type="evidence" value="ECO:0007669"/>
    <property type="project" value="Ensembl"/>
</dbReference>
<dbReference type="GO" id="GO:0005737">
    <property type="term" value="C:cytoplasm"/>
    <property type="evidence" value="ECO:0007669"/>
    <property type="project" value="UniProtKB-SubCell"/>
</dbReference>
<dbReference type="GO" id="GO:0005730">
    <property type="term" value="C:nucleolus"/>
    <property type="evidence" value="ECO:0000314"/>
    <property type="project" value="HPA"/>
</dbReference>
<dbReference type="GO" id="GO:0005654">
    <property type="term" value="C:nucleoplasm"/>
    <property type="evidence" value="ECO:0000314"/>
    <property type="project" value="HPA"/>
</dbReference>
<dbReference type="GO" id="GO:0005634">
    <property type="term" value="C:nucleus"/>
    <property type="evidence" value="ECO:0000318"/>
    <property type="project" value="GO_Central"/>
</dbReference>
<dbReference type="GO" id="GO:0005886">
    <property type="term" value="C:plasma membrane"/>
    <property type="evidence" value="ECO:0007669"/>
    <property type="project" value="UniProtKB-SubCell"/>
</dbReference>
<dbReference type="GO" id="GO:0005516">
    <property type="term" value="F:calmodulin binding"/>
    <property type="evidence" value="ECO:0007669"/>
    <property type="project" value="UniProtKB-KW"/>
</dbReference>
<dbReference type="GO" id="GO:0042802">
    <property type="term" value="F:identical protein binding"/>
    <property type="evidence" value="ECO:0000353"/>
    <property type="project" value="IntAct"/>
</dbReference>
<dbReference type="GO" id="GO:0003723">
    <property type="term" value="F:RNA binding"/>
    <property type="evidence" value="ECO:0007005"/>
    <property type="project" value="UniProtKB"/>
</dbReference>
<dbReference type="GO" id="GO:0003712">
    <property type="term" value="F:transcription coregulator activity"/>
    <property type="evidence" value="ECO:0000318"/>
    <property type="project" value="GO_Central"/>
</dbReference>
<dbReference type="GO" id="GO:0008270">
    <property type="term" value="F:zinc ion binding"/>
    <property type="evidence" value="ECO:0007669"/>
    <property type="project" value="UniProtKB-KW"/>
</dbReference>
<dbReference type="GO" id="GO:0006355">
    <property type="term" value="P:regulation of DNA-templated transcription"/>
    <property type="evidence" value="ECO:0007669"/>
    <property type="project" value="InterPro"/>
</dbReference>
<dbReference type="CDD" id="cd12533">
    <property type="entry name" value="RRM_EWS"/>
    <property type="match status" value="1"/>
</dbReference>
<dbReference type="FunFam" id="3.30.70.330:FF:000368">
    <property type="entry name" value="EWS RNA binding protein 1"/>
    <property type="match status" value="1"/>
</dbReference>
<dbReference type="FunFam" id="4.10.1060.10:FF:000002">
    <property type="entry name" value="RNA-binding protein EWS isoform 1"/>
    <property type="match status" value="1"/>
</dbReference>
<dbReference type="Gene3D" id="3.30.70.330">
    <property type="match status" value="1"/>
</dbReference>
<dbReference type="Gene3D" id="4.10.1060.10">
    <property type="entry name" value="Zinc finger, RanBP2-type"/>
    <property type="match status" value="1"/>
</dbReference>
<dbReference type="InterPro" id="IPR034869">
    <property type="entry name" value="EWS_RRM"/>
</dbReference>
<dbReference type="InterPro" id="IPR012677">
    <property type="entry name" value="Nucleotide-bd_a/b_plait_sf"/>
</dbReference>
<dbReference type="InterPro" id="IPR035979">
    <property type="entry name" value="RBD_domain_sf"/>
</dbReference>
<dbReference type="InterPro" id="IPR000504">
    <property type="entry name" value="RRM_dom"/>
</dbReference>
<dbReference type="InterPro" id="IPR034870">
    <property type="entry name" value="TET_fam"/>
</dbReference>
<dbReference type="InterPro" id="IPR001876">
    <property type="entry name" value="Znf_RanBP2"/>
</dbReference>
<dbReference type="InterPro" id="IPR036443">
    <property type="entry name" value="Znf_RanBP2_sf"/>
</dbReference>
<dbReference type="PANTHER" id="PTHR23238">
    <property type="entry name" value="RNA BINDING PROTEIN"/>
    <property type="match status" value="1"/>
</dbReference>
<dbReference type="Pfam" id="PF00076">
    <property type="entry name" value="RRM_1"/>
    <property type="match status" value="1"/>
</dbReference>
<dbReference type="Pfam" id="PF00641">
    <property type="entry name" value="Zn_ribbon_RanBP"/>
    <property type="match status" value="1"/>
</dbReference>
<dbReference type="SMART" id="SM00360">
    <property type="entry name" value="RRM"/>
    <property type="match status" value="1"/>
</dbReference>
<dbReference type="SMART" id="SM00547">
    <property type="entry name" value="ZnF_RBZ"/>
    <property type="match status" value="1"/>
</dbReference>
<dbReference type="SUPFAM" id="SSF90209">
    <property type="entry name" value="Ran binding protein zinc finger-like"/>
    <property type="match status" value="1"/>
</dbReference>
<dbReference type="SUPFAM" id="SSF54928">
    <property type="entry name" value="RNA-binding domain, RBD"/>
    <property type="match status" value="1"/>
</dbReference>
<dbReference type="PROSITE" id="PS50102">
    <property type="entry name" value="RRM"/>
    <property type="match status" value="1"/>
</dbReference>
<dbReference type="PROSITE" id="PS01358">
    <property type="entry name" value="ZF_RANBP2_1"/>
    <property type="match status" value="1"/>
</dbReference>
<dbReference type="PROSITE" id="PS50199">
    <property type="entry name" value="ZF_RANBP2_2"/>
    <property type="match status" value="1"/>
</dbReference>
<proteinExistence type="evidence at protein level"/>
<reference key="1">
    <citation type="journal article" date="1992" name="Nature">
        <title>Gene fusion with an ETS DNA-binding domain caused by chromosome translocation in human tumours.</title>
        <authorList>
            <person name="Delattre O."/>
            <person name="Zucman J."/>
            <person name="Plougastel B."/>
            <person name="Desmaze C."/>
            <person name="Melot T."/>
            <person name="Peter M."/>
            <person name="Kovar H."/>
            <person name="Joubert I."/>
            <person name="de Jong P."/>
            <person name="Rouleau G."/>
            <person name="Aurias A."/>
            <person name="Thomas G."/>
        </authorList>
    </citation>
    <scope>NUCLEOTIDE SEQUENCE [MRNA] (ISOFORM EWS)</scope>
    <scope>INVOLVEMENT IN EWS</scope>
    <scope>CHROMOSOMAL TRANSLOCATION WITH FLI</scope>
    <source>
        <tissue>Fetal brain</tissue>
    </source>
</reference>
<reference key="2">
    <citation type="journal article" date="1993" name="Genomics">
        <title>Genomic structure of the EWS gene and its relationship to EWSR1, a site of tumor-associated chromosome translocation.</title>
        <authorList>
            <person name="Plougastel B."/>
            <person name="Zucman J."/>
            <person name="Peter M."/>
            <person name="Thomas G."/>
            <person name="Delattre O."/>
        </authorList>
    </citation>
    <scope>NUCLEOTIDE SEQUENCE [GENOMIC DNA]</scope>
</reference>
<reference key="3">
    <citation type="submission" date="1998-05" db="EMBL/GenBank/DDBJ databases">
        <title>Genomic sequence of the human EWS gene with the 5' flanking region.</title>
        <authorList>
            <person name="Zucman-Rossi J."/>
            <person name="Legoix P."/>
            <person name="Thomas G."/>
        </authorList>
    </citation>
    <scope>NUCLEOTIDE SEQUENCE [GENOMIC DNA]</scope>
</reference>
<reference key="4">
    <citation type="journal article" date="2004" name="Genome Biol.">
        <title>A genome annotation-driven approach to cloning the human ORFeome.</title>
        <authorList>
            <person name="Collins J.E."/>
            <person name="Wright C.L."/>
            <person name="Edwards C.A."/>
            <person name="Davis M.P."/>
            <person name="Grinham J.A."/>
            <person name="Cole C.G."/>
            <person name="Goward M.E."/>
            <person name="Aguado B."/>
            <person name="Mallya M."/>
            <person name="Mokrab Y."/>
            <person name="Huckle E.J."/>
            <person name="Beare D.M."/>
            <person name="Dunham I."/>
        </authorList>
    </citation>
    <scope>NUCLEOTIDE SEQUENCE [LARGE SCALE MRNA] (ISOFORM 3)</scope>
</reference>
<reference key="5">
    <citation type="journal article" date="2004" name="Nat. Genet.">
        <title>Complete sequencing and characterization of 21,243 full-length human cDNAs.</title>
        <authorList>
            <person name="Ota T."/>
            <person name="Suzuki Y."/>
            <person name="Nishikawa T."/>
            <person name="Otsuki T."/>
            <person name="Sugiyama T."/>
            <person name="Irie R."/>
            <person name="Wakamatsu A."/>
            <person name="Hayashi K."/>
            <person name="Sato H."/>
            <person name="Nagai K."/>
            <person name="Kimura K."/>
            <person name="Makita H."/>
            <person name="Sekine M."/>
            <person name="Obayashi M."/>
            <person name="Nishi T."/>
            <person name="Shibahara T."/>
            <person name="Tanaka T."/>
            <person name="Ishii S."/>
            <person name="Yamamoto J."/>
            <person name="Saito K."/>
            <person name="Kawai Y."/>
            <person name="Isono Y."/>
            <person name="Nakamura Y."/>
            <person name="Nagahari K."/>
            <person name="Murakami K."/>
            <person name="Yasuda T."/>
            <person name="Iwayanagi T."/>
            <person name="Wagatsuma M."/>
            <person name="Shiratori A."/>
            <person name="Sudo H."/>
            <person name="Hosoiri T."/>
            <person name="Kaku Y."/>
            <person name="Kodaira H."/>
            <person name="Kondo H."/>
            <person name="Sugawara M."/>
            <person name="Takahashi M."/>
            <person name="Kanda K."/>
            <person name="Yokoi T."/>
            <person name="Furuya T."/>
            <person name="Kikkawa E."/>
            <person name="Omura Y."/>
            <person name="Abe K."/>
            <person name="Kamihara K."/>
            <person name="Katsuta N."/>
            <person name="Sato K."/>
            <person name="Tanikawa M."/>
            <person name="Yamazaki M."/>
            <person name="Ninomiya K."/>
            <person name="Ishibashi T."/>
            <person name="Yamashita H."/>
            <person name="Murakawa K."/>
            <person name="Fujimori K."/>
            <person name="Tanai H."/>
            <person name="Kimata M."/>
            <person name="Watanabe M."/>
            <person name="Hiraoka S."/>
            <person name="Chiba Y."/>
            <person name="Ishida S."/>
            <person name="Ono Y."/>
            <person name="Takiguchi S."/>
            <person name="Watanabe S."/>
            <person name="Yosida M."/>
            <person name="Hotuta T."/>
            <person name="Kusano J."/>
            <person name="Kanehori K."/>
            <person name="Takahashi-Fujii A."/>
            <person name="Hara H."/>
            <person name="Tanase T.-O."/>
            <person name="Nomura Y."/>
            <person name="Togiya S."/>
            <person name="Komai F."/>
            <person name="Hara R."/>
            <person name="Takeuchi K."/>
            <person name="Arita M."/>
            <person name="Imose N."/>
            <person name="Musashino K."/>
            <person name="Yuuki H."/>
            <person name="Oshima A."/>
            <person name="Sasaki N."/>
            <person name="Aotsuka S."/>
            <person name="Yoshikawa Y."/>
            <person name="Matsunawa H."/>
            <person name="Ichihara T."/>
            <person name="Shiohata N."/>
            <person name="Sano S."/>
            <person name="Moriya S."/>
            <person name="Momiyama H."/>
            <person name="Satoh N."/>
            <person name="Takami S."/>
            <person name="Terashima Y."/>
            <person name="Suzuki O."/>
            <person name="Nakagawa S."/>
            <person name="Senoh A."/>
            <person name="Mizoguchi H."/>
            <person name="Goto Y."/>
            <person name="Shimizu F."/>
            <person name="Wakebe H."/>
            <person name="Hishigaki H."/>
            <person name="Watanabe T."/>
            <person name="Sugiyama A."/>
            <person name="Takemoto M."/>
            <person name="Kawakami B."/>
            <person name="Yamazaki M."/>
            <person name="Watanabe K."/>
            <person name="Kumagai A."/>
            <person name="Itakura S."/>
            <person name="Fukuzumi Y."/>
            <person name="Fujimori Y."/>
            <person name="Komiyama M."/>
            <person name="Tashiro H."/>
            <person name="Tanigami A."/>
            <person name="Fujiwara T."/>
            <person name="Ono T."/>
            <person name="Yamada K."/>
            <person name="Fujii Y."/>
            <person name="Ozaki K."/>
            <person name="Hirao M."/>
            <person name="Ohmori Y."/>
            <person name="Kawabata A."/>
            <person name="Hikiji T."/>
            <person name="Kobatake N."/>
            <person name="Inagaki H."/>
            <person name="Ikema Y."/>
            <person name="Okamoto S."/>
            <person name="Okitani R."/>
            <person name="Kawakami T."/>
            <person name="Noguchi S."/>
            <person name="Itoh T."/>
            <person name="Shigeta K."/>
            <person name="Senba T."/>
            <person name="Matsumura K."/>
            <person name="Nakajima Y."/>
            <person name="Mizuno T."/>
            <person name="Morinaga M."/>
            <person name="Sasaki M."/>
            <person name="Togashi T."/>
            <person name="Oyama M."/>
            <person name="Hata H."/>
            <person name="Watanabe M."/>
            <person name="Komatsu T."/>
            <person name="Mizushima-Sugano J."/>
            <person name="Satoh T."/>
            <person name="Shirai Y."/>
            <person name="Takahashi Y."/>
            <person name="Nakagawa K."/>
            <person name="Okumura K."/>
            <person name="Nagase T."/>
            <person name="Nomura N."/>
            <person name="Kikuchi H."/>
            <person name="Masuho Y."/>
            <person name="Yamashita R."/>
            <person name="Nakai K."/>
            <person name="Yada T."/>
            <person name="Nakamura Y."/>
            <person name="Ohara O."/>
            <person name="Isogai T."/>
            <person name="Sugano S."/>
        </authorList>
    </citation>
    <scope>NUCLEOTIDE SEQUENCE [LARGE SCALE MRNA] (ISOFORMS 5 AND 6)</scope>
</reference>
<reference key="6">
    <citation type="journal article" date="1999" name="Nature">
        <title>The DNA sequence of human chromosome 22.</title>
        <authorList>
            <person name="Dunham I."/>
            <person name="Hunt A.R."/>
            <person name="Collins J.E."/>
            <person name="Bruskiewich R."/>
            <person name="Beare D.M."/>
            <person name="Clamp M."/>
            <person name="Smink L.J."/>
            <person name="Ainscough R."/>
            <person name="Almeida J.P."/>
            <person name="Babbage A.K."/>
            <person name="Bagguley C."/>
            <person name="Bailey J."/>
            <person name="Barlow K.F."/>
            <person name="Bates K.N."/>
            <person name="Beasley O.P."/>
            <person name="Bird C.P."/>
            <person name="Blakey S.E."/>
            <person name="Bridgeman A.M."/>
            <person name="Buck D."/>
            <person name="Burgess J."/>
            <person name="Burrill W.D."/>
            <person name="Burton J."/>
            <person name="Carder C."/>
            <person name="Carter N.P."/>
            <person name="Chen Y."/>
            <person name="Clark G."/>
            <person name="Clegg S.M."/>
            <person name="Cobley V.E."/>
            <person name="Cole C.G."/>
            <person name="Collier R.E."/>
            <person name="Connor R."/>
            <person name="Conroy D."/>
            <person name="Corby N.R."/>
            <person name="Coville G.J."/>
            <person name="Cox A.V."/>
            <person name="Davis J."/>
            <person name="Dawson E."/>
            <person name="Dhami P.D."/>
            <person name="Dockree C."/>
            <person name="Dodsworth S.J."/>
            <person name="Durbin R.M."/>
            <person name="Ellington A.G."/>
            <person name="Evans K.L."/>
            <person name="Fey J.M."/>
            <person name="Fleming K."/>
            <person name="French L."/>
            <person name="Garner A.A."/>
            <person name="Gilbert J.G.R."/>
            <person name="Goward M.E."/>
            <person name="Grafham D.V."/>
            <person name="Griffiths M.N.D."/>
            <person name="Hall C."/>
            <person name="Hall R.E."/>
            <person name="Hall-Tamlyn G."/>
            <person name="Heathcott R.W."/>
            <person name="Ho S."/>
            <person name="Holmes S."/>
            <person name="Hunt S.E."/>
            <person name="Jones M.C."/>
            <person name="Kershaw J."/>
            <person name="Kimberley A.M."/>
            <person name="King A."/>
            <person name="Laird G.K."/>
            <person name="Langford C.F."/>
            <person name="Leversha M.A."/>
            <person name="Lloyd C."/>
            <person name="Lloyd D.M."/>
            <person name="Martyn I.D."/>
            <person name="Mashreghi-Mohammadi M."/>
            <person name="Matthews L.H."/>
            <person name="Mccann O.T."/>
            <person name="Mcclay J."/>
            <person name="Mclaren S."/>
            <person name="McMurray A.A."/>
            <person name="Milne S.A."/>
            <person name="Mortimore B.J."/>
            <person name="Odell C.N."/>
            <person name="Pavitt R."/>
            <person name="Pearce A.V."/>
            <person name="Pearson D."/>
            <person name="Phillimore B.J.C.T."/>
            <person name="Phillips S.H."/>
            <person name="Plumb R.W."/>
            <person name="Ramsay H."/>
            <person name="Ramsey Y."/>
            <person name="Rogers L."/>
            <person name="Ross M.T."/>
            <person name="Scott C.E."/>
            <person name="Sehra H.K."/>
            <person name="Skuce C.D."/>
            <person name="Smalley S."/>
            <person name="Smith M.L."/>
            <person name="Soderlund C."/>
            <person name="Spragon L."/>
            <person name="Steward C.A."/>
            <person name="Sulston J.E."/>
            <person name="Swann R.M."/>
            <person name="Vaudin M."/>
            <person name="Wall M."/>
            <person name="Wallis J.M."/>
            <person name="Whiteley M.N."/>
            <person name="Willey D.L."/>
            <person name="Williams L."/>
            <person name="Williams S.A."/>
            <person name="Williamson H."/>
            <person name="Wilmer T.E."/>
            <person name="Wilming L."/>
            <person name="Wright C.L."/>
            <person name="Hubbard T."/>
            <person name="Bentley D.R."/>
            <person name="Beck S."/>
            <person name="Rogers J."/>
            <person name="Shimizu N."/>
            <person name="Minoshima S."/>
            <person name="Kawasaki K."/>
            <person name="Sasaki T."/>
            <person name="Asakawa S."/>
            <person name="Kudoh J."/>
            <person name="Shintani A."/>
            <person name="Shibuya K."/>
            <person name="Yoshizaki Y."/>
            <person name="Aoki N."/>
            <person name="Mitsuyama S."/>
            <person name="Roe B.A."/>
            <person name="Chen F."/>
            <person name="Chu L."/>
            <person name="Crabtree J."/>
            <person name="Deschamps S."/>
            <person name="Do A."/>
            <person name="Do T."/>
            <person name="Dorman A."/>
            <person name="Fang F."/>
            <person name="Fu Y."/>
            <person name="Hu P."/>
            <person name="Hua A."/>
            <person name="Kenton S."/>
            <person name="Lai H."/>
            <person name="Lao H.I."/>
            <person name="Lewis J."/>
            <person name="Lewis S."/>
            <person name="Lin S.-P."/>
            <person name="Loh P."/>
            <person name="Malaj E."/>
            <person name="Nguyen T."/>
            <person name="Pan H."/>
            <person name="Phan S."/>
            <person name="Qi S."/>
            <person name="Qian Y."/>
            <person name="Ray L."/>
            <person name="Ren Q."/>
            <person name="Shaull S."/>
            <person name="Sloan D."/>
            <person name="Song L."/>
            <person name="Wang Q."/>
            <person name="Wang Y."/>
            <person name="Wang Z."/>
            <person name="White J."/>
            <person name="Willingham D."/>
            <person name="Wu H."/>
            <person name="Yao Z."/>
            <person name="Zhan M."/>
            <person name="Zhang G."/>
            <person name="Chissoe S."/>
            <person name="Murray J."/>
            <person name="Miller N."/>
            <person name="Minx P."/>
            <person name="Fulton R."/>
            <person name="Johnson D."/>
            <person name="Bemis G."/>
            <person name="Bentley D."/>
            <person name="Bradshaw H."/>
            <person name="Bourne S."/>
            <person name="Cordes M."/>
            <person name="Du Z."/>
            <person name="Fulton L."/>
            <person name="Goela D."/>
            <person name="Graves T."/>
            <person name="Hawkins J."/>
            <person name="Hinds K."/>
            <person name="Kemp K."/>
            <person name="Latreille P."/>
            <person name="Layman D."/>
            <person name="Ozersky P."/>
            <person name="Rohlfing T."/>
            <person name="Scheet P."/>
            <person name="Walker C."/>
            <person name="Wamsley A."/>
            <person name="Wohldmann P."/>
            <person name="Pepin K."/>
            <person name="Nelson J."/>
            <person name="Korf I."/>
            <person name="Bedell J.A."/>
            <person name="Hillier L.W."/>
            <person name="Mardis E."/>
            <person name="Waterston R."/>
            <person name="Wilson R."/>
            <person name="Emanuel B.S."/>
            <person name="Shaikh T."/>
            <person name="Kurahashi H."/>
            <person name="Saitta S."/>
            <person name="Budarf M.L."/>
            <person name="McDermid H.E."/>
            <person name="Johnson A."/>
            <person name="Wong A.C.C."/>
            <person name="Morrow B.E."/>
            <person name="Edelmann L."/>
            <person name="Kim U.J."/>
            <person name="Shizuya H."/>
            <person name="Simon M.I."/>
            <person name="Dumanski J.P."/>
            <person name="Peyrard M."/>
            <person name="Kedra D."/>
            <person name="Seroussi E."/>
            <person name="Fransson I."/>
            <person name="Tapia I."/>
            <person name="Bruder C.E."/>
            <person name="O'Brien K.P."/>
            <person name="Wilkinson P."/>
            <person name="Bodenteich A."/>
            <person name="Hartman K."/>
            <person name="Hu X."/>
            <person name="Khan A.S."/>
            <person name="Lane L."/>
            <person name="Tilahun Y."/>
            <person name="Wright H."/>
        </authorList>
    </citation>
    <scope>NUCLEOTIDE SEQUENCE [LARGE SCALE GENOMIC DNA]</scope>
</reference>
<reference key="7">
    <citation type="submission" date="2005-07" db="EMBL/GenBank/DDBJ databases">
        <authorList>
            <person name="Mural R.J."/>
            <person name="Istrail S."/>
            <person name="Sutton G.G."/>
            <person name="Florea L."/>
            <person name="Halpern A.L."/>
            <person name="Mobarry C.M."/>
            <person name="Lippert R."/>
            <person name="Walenz B."/>
            <person name="Shatkay H."/>
            <person name="Dew I."/>
            <person name="Miller J.R."/>
            <person name="Flanigan M.J."/>
            <person name="Edwards N.J."/>
            <person name="Bolanos R."/>
            <person name="Fasulo D."/>
            <person name="Halldorsson B.V."/>
            <person name="Hannenhalli S."/>
            <person name="Turner R."/>
            <person name="Yooseph S."/>
            <person name="Lu F."/>
            <person name="Nusskern D.R."/>
            <person name="Shue B.C."/>
            <person name="Zheng X.H."/>
            <person name="Zhong F."/>
            <person name="Delcher A.L."/>
            <person name="Huson D.H."/>
            <person name="Kravitz S.A."/>
            <person name="Mouchard L."/>
            <person name="Reinert K."/>
            <person name="Remington K.A."/>
            <person name="Clark A.G."/>
            <person name="Waterman M.S."/>
            <person name="Eichler E.E."/>
            <person name="Adams M.D."/>
            <person name="Hunkapiller M.W."/>
            <person name="Myers E.W."/>
            <person name="Venter J.C."/>
        </authorList>
    </citation>
    <scope>NUCLEOTIDE SEQUENCE [LARGE SCALE GENOMIC DNA]</scope>
</reference>
<reference key="8">
    <citation type="journal article" date="2004" name="Genome Res.">
        <title>The status, quality, and expansion of the NIH full-length cDNA project: the Mammalian Gene Collection (MGC).</title>
        <authorList>
            <consortium name="The MGC Project Team"/>
        </authorList>
    </citation>
    <scope>NUCLEOTIDE SEQUENCE [LARGE SCALE MRNA] (ISOFORMS EWS; 3 AND 4)</scope>
    <source>
        <tissue>Lymph</tissue>
        <tissue>Muscle</tissue>
        <tissue>Placenta</tissue>
        <tissue>Skin</tissue>
    </source>
</reference>
<reference key="9">
    <citation type="journal article" date="1996" name="Genomics">
        <title>Identification of new members of the Gas2 and Ras families in the 22q12 chromosome region.</title>
        <authorList>
            <person name="Zucman-Rossi J."/>
            <person name="Legoix P."/>
            <person name="Thomas G."/>
        </authorList>
    </citation>
    <scope>NUCLEOTIDE SEQUENCE [GENOMIC DNA] OF 1-345</scope>
</reference>
<reference key="10">
    <citation type="journal article" date="2001" name="J. Biol. Chem.">
        <title>Exposure on cell surface and extensive arginine methylation of Ewing sarcoma (EWS) protein.</title>
        <authorList>
            <person name="Belyanskaya L.L."/>
            <person name="Gehrig P.M."/>
            <person name="Gehring H."/>
        </authorList>
    </citation>
    <scope>PROTEIN SEQUENCE OF 128-158; 233-247; 268-324; 334-364; 393-439; 447-518 AND 551-641</scope>
    <scope>METHYLATION AT ARG-300; ARG-302; ARG-304; ARG-309; ARG-314; ARG-317; ARG-321; ARG-455; ARG-464; ARG-471; ARG-490; ARG-494; ARG-500; ARG-503; ARG-506; ARG-563; ARG-565; ARG-572; ARG-575; ARG-581; ARG-589; ARG-592; ARG-596; ARG-600; ARG-603; ARG-607; ARG-615; ARG-633 AND ARG-636</scope>
    <scope>IDENTIFICATION BY MASS SPECTROMETRY</scope>
</reference>
<reference key="11">
    <citation type="journal article" date="1995" name="Genes Chromosomes Cancer">
        <title>Molecular analysis of a t(11;22) translocation junction in a case of Ewing's sarcoma.</title>
        <authorList>
            <person name="Bhagirath T."/>
            <person name="Abe S."/>
            <person name="Nojima T."/>
            <person name="Yoshida M.C."/>
        </authorList>
    </citation>
    <scope>NUCLEOTIDE SEQUENCE [GENOMIC DNA] OF 241-268</scope>
    <source>
        <tissue>Placenta</tissue>
    </source>
</reference>
<reference key="12">
    <citation type="submission" date="2008-12" db="UniProtKB">
        <authorList>
            <person name="Bienvenut W.V."/>
            <person name="Lilla S."/>
            <person name="von Kriegsheim A."/>
            <person name="Lempens A."/>
            <person name="Zebisch A."/>
            <person name="Kolch W."/>
        </authorList>
    </citation>
    <scope>PROTEIN SEQUENCE OF 269-292; 393-404; 411-439; 491-500 AND 615-632</scope>
    <scope>METHYLATION AT ARG-494 AND ARG-615</scope>
    <scope>IDENTIFICATION BY MASS SPECTROMETRY</scope>
    <source>
        <tissue>Colon carcinoma</tissue>
        <tissue>Ovarian carcinoma</tissue>
    </source>
</reference>
<reference key="13">
    <citation type="journal article" date="1997" name="J. Biol. Chem.">
        <title>The prooncoprotein EWS binds calmodulin and is phosphorylated by protein kinase C through an IQ domain.</title>
        <authorList>
            <person name="Deloulme J.C."/>
            <person name="Prichard L."/>
            <person name="Delattre O."/>
            <person name="Storm D.R."/>
        </authorList>
    </citation>
    <scope>PARTIAL PROTEIN SEQUENCE</scope>
    <scope>PHOSPHORYLATION AT SER-266</scope>
</reference>
<reference key="14">
    <citation type="journal article" date="1993" name="Nat. Genet.">
        <title>EWS and ATF-1 gene fusion induced by t(12;22) translocation in malignant melanoma of soft parts.</title>
        <authorList>
            <person name="Zucman J."/>
            <person name="Delattre O."/>
            <person name="Desmaze C."/>
            <person name="Epstein A.L."/>
            <person name="Stenman G."/>
            <person name="Speleman F."/>
            <person name="Fletchers C.D."/>
            <person name="Aurias A."/>
            <person name="Thomas G."/>
        </authorList>
    </citation>
    <scope>CHROMOSOMAL TRANSLOCATION WITH ATF1</scope>
</reference>
<reference key="15">
    <citation type="journal article" date="1994" name="Oncogene">
        <title>The EWS gene, involved in Ewing family of tumors, malignant melanoma of soft parts and desmoplastic small round cell tumors, codes for an RNA binding protein with novel regulatory domains.</title>
        <authorList>
            <person name="Ohno T."/>
            <person name="Ouchida M."/>
            <person name="Lee L."/>
            <person name="Gatalica Z."/>
            <person name="Rao V.N."/>
            <person name="Reddy E.S.P."/>
        </authorList>
    </citation>
    <scope>ALTERNATIVE SPLICING</scope>
    <scope>RNA-BINDING</scope>
</reference>
<reference key="16">
    <citation type="journal article" date="1995" name="Genes Chromosomes Cancer">
        <title>Fusion of the EWS gene to a DNA segment from 9q22-31 in a human myxoid chondrosarcoma.</title>
        <authorList>
            <person name="Gill S."/>
            <person name="McManus A.P."/>
            <person name="Crew A.J."/>
            <person name="Benjamin H."/>
            <person name="Sheer D."/>
            <person name="Gusterson B.A."/>
            <person name="Pinkerton C.R."/>
            <person name="Patel K."/>
            <person name="Cooper C.S."/>
            <person name="Shipley J.M."/>
        </authorList>
    </citation>
    <scope>CHROMOSOMAL TRANSLOCATION WITH NR4A3</scope>
</reference>
<reference key="17">
    <citation type="journal article" date="1995" name="Oncogene">
        <title>A variant Ewing's sarcoma translocation (7;22) fuses the EWS gene to the ETS gene ETV1.</title>
        <authorList>
            <person name="Jeon I.-S."/>
            <person name="Davis J.N."/>
            <person name="Braun B.S."/>
            <person name="Sublett J.E."/>
            <person name="Roussel M.F."/>
            <person name="Denny C.T."/>
            <person name="Shapiro D.N."/>
        </authorList>
    </citation>
    <scope>CHROMOSOMAL TRANSLOCATION WITH ETV1</scope>
</reference>
<reference key="18">
    <citation type="journal article" date="1995" name="Proc. Natl. Acad. Sci. U.S.A.">
        <title>Characterization of the genomic breakpoint and chimeric transcripts in the EWS-WT1 gene fusion of desmoplastic small round cell tumor.</title>
        <authorList>
            <person name="Gerald W.L."/>
            <person name="Rosai J."/>
            <person name="Ladanyi M."/>
        </authorList>
    </citation>
    <scope>CHROMOSOMAL TRANSLOCATION WITH WT1</scope>
</reference>
<reference key="19">
    <citation type="journal article" date="1997" name="Oncogene">
        <title>A new member of the ETS family fused to EWS in Ewing tumors.</title>
        <authorList>
            <person name="Peter M."/>
            <person name="Couturier J."/>
            <person name="Pacquement H."/>
            <person name="Michon J."/>
            <person name="Thomas G."/>
            <person name="Magdelenat H."/>
            <person name="Delattre O."/>
        </authorList>
    </citation>
    <scope>INVOLVEMENT IN EWS</scope>
    <scope>CHROMOSOMAL TRANSLOCATION WITH FEV</scope>
</reference>
<reference key="20">
    <citation type="journal article" date="1998" name="J. Biol. Chem.">
        <title>The transcriptional repressor ZFM1 interacts with and modulates the ability of EWS to activate transcription.</title>
        <authorList>
            <person name="Zhang D."/>
            <person name="Paley A.J."/>
            <person name="Childs G."/>
        </authorList>
    </citation>
    <scope>INTERACTION WITH SF1</scope>
</reference>
<reference key="21">
    <citation type="journal article" date="2000" name="J. Biol. Chem.">
        <title>Transcriptional activation by the Ewing's sarcoma (EWS) oncogene can be cis-repressed by the EWS RNA-binding domain.</title>
        <authorList>
            <person name="Li K.K.C."/>
            <person name="Lee K.A.W."/>
        </authorList>
    </citation>
    <scope>CHARACTERIZATION</scope>
</reference>
<reference key="22">
    <citation type="journal article" date="2000" name="Oncogene">
        <title>A novel zinc finger gene is fused to EWS in small round cell tumor.</title>
        <authorList>
            <person name="Mastrangelo T."/>
            <person name="Modena P."/>
            <person name="Tornielli S."/>
            <person name="Bullrich F."/>
            <person name="Testi A."/>
            <person name="Mezzelani A."/>
            <person name="Radice P."/>
            <person name="Azzarelli A."/>
            <person name="Pilotti S."/>
            <person name="Croce C."/>
            <person name="Pierotti M."/>
            <person name="Sozzi G."/>
        </authorList>
    </citation>
    <scope>CHROMOSOMAL TRANSLOCATION WITH PATZ1</scope>
</reference>
<reference key="23">
    <citation type="journal article" date="2004" name="N. Engl. J. Med.">
        <title>A patient with two Ewing's sarcomas with distinct EWS fusion transcripts.</title>
        <authorList>
            <person name="Bielack S.S."/>
            <person name="Paulussen M."/>
            <person name="Koehler G."/>
        </authorList>
    </citation>
    <scope>CHROMOSOMAL TRANSLOCATION WITH ERG</scope>
    <scope>CHROMOSOMAL TRANSLOCATION WITH FLI1</scope>
    <scope>INVOLVEMENT IN EWS</scope>
</reference>
<reference key="24">
    <citation type="journal article" date="2006" name="Cell Cycle">
        <title>Expression of EWS-ETS fusions in NIH3T3 cells reveals significant differences to Ewing's sarcoma.</title>
        <authorList>
            <person name="Braunreiter C.L."/>
            <person name="Hancock J.D."/>
            <person name="Coffin C.M."/>
            <person name="Boucher K.M."/>
            <person name="Lessnick S.L."/>
        </authorList>
    </citation>
    <scope>CHARACTERIZATION OF THE EWSR1-FEV FUSION PROTEIN</scope>
</reference>
<reference key="25">
    <citation type="journal article" date="2006" name="J. Mol. Biol.">
        <title>Identification and characterization of the nuclear localization/retention signal in the EWS proto-oncoprotein.</title>
        <authorList>
            <person name="Zakaryan R.P."/>
            <person name="Gehring H."/>
        </authorList>
    </citation>
    <scope>SUBCELLULAR LOCATION</scope>
    <scope>NUCLEAR LOCALIZATION SIGNAL</scope>
    <scope>MUTAGENESIS OF ARG-648; ARG-651; ARG-652; ASP-653; ARG-654; PRO-655 AND TYR-656</scope>
</reference>
<reference key="26">
    <citation type="journal article" date="2008" name="Hum. Mol. Genet.">
        <title>TDRD3, a novel Tudor domain-containing protein, localizes to cytoplasmic stress granules.</title>
        <authorList>
            <person name="Goulet I."/>
            <person name="Boisvenue S."/>
            <person name="Mokas S."/>
            <person name="Mazroui R."/>
            <person name="Cote J."/>
        </authorList>
    </citation>
    <scope>INTERACTION WITH TDRD3</scope>
</reference>
<reference key="27">
    <citation type="journal article" date="2008" name="Proteins">
        <title>Identification of proteins interacting with protein arginine methyltransferase 8: the Ewing sarcoma (EWS) protein binds independent of its methylation state.</title>
        <authorList>
            <person name="Pahlich S."/>
            <person name="Zakaryan R.P."/>
            <person name="Gehring H."/>
        </authorList>
    </citation>
    <scope>METHYLATION AT ARG-490; ARG-572; ARG-596; ARG-603 AND ARG-607</scope>
</reference>
<reference key="28">
    <citation type="journal article" date="2010" name="Sci. Signal.">
        <title>Quantitative phosphoproteomics reveals widespread full phosphorylation site occupancy during mitosis.</title>
        <authorList>
            <person name="Olsen J.V."/>
            <person name="Vermeulen M."/>
            <person name="Santamaria A."/>
            <person name="Kumar C."/>
            <person name="Miller M.L."/>
            <person name="Jensen L.J."/>
            <person name="Gnad F."/>
            <person name="Cox J."/>
            <person name="Jensen T.S."/>
            <person name="Nigg E.A."/>
            <person name="Brunak S."/>
            <person name="Mann M."/>
        </authorList>
    </citation>
    <scope>IDENTIFICATION BY MASS SPECTROMETRY [LARGE SCALE ANALYSIS]</scope>
    <source>
        <tissue>Cervix carcinoma</tissue>
    </source>
</reference>
<reference key="29">
    <citation type="journal article" date="2011" name="BMC Syst. Biol.">
        <title>Initial characterization of the human central proteome.</title>
        <authorList>
            <person name="Burkard T.R."/>
            <person name="Planyavsky M."/>
            <person name="Kaupe I."/>
            <person name="Breitwieser F.P."/>
            <person name="Buerckstuemmer T."/>
            <person name="Bennett K.L."/>
            <person name="Superti-Furga G."/>
            <person name="Colinge J."/>
        </authorList>
    </citation>
    <scope>IDENTIFICATION BY MASS SPECTROMETRY [LARGE SCALE ANALYSIS]</scope>
</reference>
<reference key="30">
    <citation type="journal article" date="2011" name="J. Mol. Biol.">
        <title>Characterization of a family of RanBP2-type zinc fingers that can recognize single-stranded RNA.</title>
        <authorList>
            <person name="Nguyen C.D."/>
            <person name="Mansfield R.E."/>
            <person name="Leung W."/>
            <person name="Vaz P.M."/>
            <person name="Loughlin F.E."/>
            <person name="Grant R.P."/>
            <person name="Mackay J.P."/>
        </authorList>
    </citation>
    <scope>FUNCTION</scope>
</reference>
<reference key="31">
    <citation type="journal article" date="2014" name="J. Proteomics">
        <title>An enzyme assisted RP-RPLC approach for in-depth analysis of human liver phosphoproteome.</title>
        <authorList>
            <person name="Bian Y."/>
            <person name="Song C."/>
            <person name="Cheng K."/>
            <person name="Dong M."/>
            <person name="Wang F."/>
            <person name="Huang J."/>
            <person name="Sun D."/>
            <person name="Wang L."/>
            <person name="Ye M."/>
            <person name="Zou H."/>
        </authorList>
    </citation>
    <scope>IDENTIFICATION BY MASS SPECTROMETRY [LARGE SCALE ANALYSIS]</scope>
    <source>
        <tissue>Liver</tissue>
    </source>
</reference>
<reference key="32">
    <citation type="journal article" date="2014" name="Mol. Cell. Proteomics">
        <title>Immunoaffinity enrichment and mass spectrometry analysis of protein methylation.</title>
        <authorList>
            <person name="Guo A."/>
            <person name="Gu H."/>
            <person name="Zhou J."/>
            <person name="Mulhern D."/>
            <person name="Wang Y."/>
            <person name="Lee K.A."/>
            <person name="Yang V."/>
            <person name="Aguiar M."/>
            <person name="Kornhauser J."/>
            <person name="Jia X."/>
            <person name="Ren J."/>
            <person name="Beausoleil S.A."/>
            <person name="Silva J.C."/>
            <person name="Vemulapalli V."/>
            <person name="Bedford M.T."/>
            <person name="Comb M.J."/>
        </authorList>
    </citation>
    <scope>METHYLATION [LARGE SCALE ANALYSIS] AT ARG-471; ARG-486 AND ARG-615</scope>
    <scope>IDENTIFICATION BY MASS SPECTROMETRY [LARGE SCALE ANALYSIS]</scope>
    <source>
        <tissue>Colon carcinoma</tissue>
    </source>
</reference>
<reference key="33">
    <citation type="submission" date="2005-11" db="PDB data bank">
        <title>Solution structure of the RNA recognition motif of Ewing sarcoma (EWS) protein.</title>
        <authorList>
            <consortium name="RIKEN structural genomics initiative (RSGI)"/>
        </authorList>
    </citation>
    <scope>STRUCTURE BY NMR OF 353-453</scope>
</reference>
<reference key="34">
    <citation type="journal article" date="2005" name="Genes Chromosomes Cancer">
        <title>Fusion of the EWSR1 and ATF1 genes without expression of the MITF-M transcript in angiomatoid fibrous histiocytoma.</title>
        <authorList>
            <person name="Hallor K.H."/>
            <person name="Mertens F."/>
            <person name="Jin Y."/>
            <person name="Meis-Kindblom J.M."/>
            <person name="Kindblom L.-G."/>
            <person name="Behrendtz M."/>
            <person name="Kalen A."/>
            <person name="Mandahl N."/>
            <person name="Panagopoulos I."/>
        </authorList>
    </citation>
    <scope>CHROMOSOMAL TRANSLOCATION WITH ATF1</scope>
    <scope>INVOLVEMENT IN AFH</scope>
</reference>
<reference key="35">
    <citation type="journal article" date="2007" name="Genes Chromosomes Cancer">
        <title>EWSR1-CREB1 is the predominant gene fusion in angiomatoid fibrous histiocytoma.</title>
        <authorList>
            <person name="Antonescu C.R."/>
            <person name="Dal Cin P."/>
            <person name="Nafa K."/>
            <person name="Teot L.A."/>
            <person name="Surti U."/>
            <person name="Fletcher C.D."/>
            <person name="Ladanyi M."/>
        </authorList>
    </citation>
    <scope>CHROMOSOMAL TRANSLOCATION WITH CREB1</scope>
    <scope>INVOLVEMENT IN AFH</scope>
</reference>
<gene>
    <name type="primary">EWSR1</name>
    <name type="synonym">EWS</name>
</gene>
<name>EWS_HUMAN</name>
<accession>Q01844</accession>
<accession>B0QYK1</accession>
<accession>Q5THL0</accession>
<accession>Q92635</accession>
<accession>Q96FE8</accession>
<accession>Q96MN4</accession>
<accession>Q96MX4</accession>
<accession>Q9BWA2</accession>
<evidence type="ECO:0000250" key="1"/>
<evidence type="ECO:0000250" key="2">
    <source>
        <dbReference type="UniProtKB" id="Q61545"/>
    </source>
</evidence>
<evidence type="ECO:0000255" key="3">
    <source>
        <dbReference type="PROSITE-ProRule" id="PRU00176"/>
    </source>
</evidence>
<evidence type="ECO:0000255" key="4">
    <source>
        <dbReference type="PROSITE-ProRule" id="PRU00322"/>
    </source>
</evidence>
<evidence type="ECO:0000256" key="5">
    <source>
        <dbReference type="SAM" id="MobiDB-lite"/>
    </source>
</evidence>
<evidence type="ECO:0000269" key="6">
    <source>
    </source>
</evidence>
<evidence type="ECO:0000269" key="7">
    <source>
    </source>
</evidence>
<evidence type="ECO:0000269" key="8">
    <source>
    </source>
</evidence>
<evidence type="ECO:0000269" key="9">
    <source>
    </source>
</evidence>
<evidence type="ECO:0000269" key="10">
    <source>
    </source>
</evidence>
<evidence type="ECO:0000269" key="11">
    <source>
    </source>
</evidence>
<evidence type="ECO:0000269" key="12">
    <source>
    </source>
</evidence>
<evidence type="ECO:0000269" key="13">
    <source>
    </source>
</evidence>
<evidence type="ECO:0000269" key="14">
    <source>
    </source>
</evidence>
<evidence type="ECO:0000269" key="15">
    <source>
    </source>
</evidence>
<evidence type="ECO:0000269" key="16">
    <source>
    </source>
</evidence>
<evidence type="ECO:0000269" key="17">
    <source>
    </source>
</evidence>
<evidence type="ECO:0000269" key="18">
    <source>
    </source>
</evidence>
<evidence type="ECO:0000269" key="19">
    <source>
    </source>
</evidence>
<evidence type="ECO:0000269" key="20">
    <source>
    </source>
</evidence>
<evidence type="ECO:0000269" key="21">
    <source>
    </source>
</evidence>
<evidence type="ECO:0000269" key="22">
    <source>
    </source>
</evidence>
<evidence type="ECO:0000269" key="23">
    <source>
    </source>
</evidence>
<evidence type="ECO:0000269" key="24">
    <source ref="12"/>
</evidence>
<evidence type="ECO:0000303" key="25">
    <source>
    </source>
</evidence>
<evidence type="ECO:0000303" key="26">
    <source>
    </source>
</evidence>
<evidence type="ECO:0000303" key="27">
    <source>
    </source>
</evidence>
<evidence type="ECO:0000305" key="28"/>
<evidence type="ECO:0007744" key="29">
    <source>
    </source>
</evidence>
<evidence type="ECO:0007829" key="30">
    <source>
        <dbReference type="PDB" id="2CPE"/>
    </source>
</evidence>